<organism>
    <name type="scientific">Thermus thermophilus (strain ATCC 27634 / DSM 579 / HB8)</name>
    <dbReference type="NCBI Taxonomy" id="300852"/>
    <lineage>
        <taxon>Bacteria</taxon>
        <taxon>Thermotogati</taxon>
        <taxon>Deinococcota</taxon>
        <taxon>Deinococci</taxon>
        <taxon>Thermales</taxon>
        <taxon>Thermaceae</taxon>
        <taxon>Thermus</taxon>
    </lineage>
</organism>
<reference key="1">
    <citation type="submission" date="2004-11" db="EMBL/GenBank/DDBJ databases">
        <title>Complete genome sequence of Thermus thermophilus HB8.</title>
        <authorList>
            <person name="Masui R."/>
            <person name="Kurokawa K."/>
            <person name="Nakagawa N."/>
            <person name="Tokunaga F."/>
            <person name="Koyama Y."/>
            <person name="Shibata T."/>
            <person name="Oshima T."/>
            <person name="Yokoyama S."/>
            <person name="Yasunaga T."/>
            <person name="Kuramitsu S."/>
        </authorList>
    </citation>
    <scope>NUCLEOTIDE SEQUENCE [LARGE SCALE GENOMIC DNA]</scope>
    <source>
        <strain>ATCC 27634 / DSM 579 / HB8</strain>
    </source>
</reference>
<reference key="2">
    <citation type="journal article" date="1994" name="Eur. J. Biochem.">
        <title>Purification and characterization of the 30S ribosomal proteins from the bacterium Thermus thermophilus.</title>
        <authorList>
            <person name="Tsiboli P."/>
            <person name="Herfurth E."/>
            <person name="Choli T."/>
        </authorList>
    </citation>
    <scope>PROTEIN SEQUENCE OF 2-37</scope>
</reference>
<reference key="3">
    <citation type="journal article" date="2005" name="Proteomics">
        <title>Extending ribosomal protein identifications to unsequenced bacterial strains using matrix-assisted laser desorption/ionization mass spectrometry.</title>
        <authorList>
            <person name="Suh M.-J."/>
            <person name="Hamburg D.M."/>
            <person name="Gregory S.T."/>
            <person name="Dahlberg A.E."/>
            <person name="Limbach P.A."/>
        </authorList>
    </citation>
    <scope>MASS SPECTROMETRY</scope>
    <source>
        <strain>ATCC 27634 / DSM 579 / HB8</strain>
    </source>
</reference>
<reference key="4">
    <citation type="journal article" date="2000" name="Nature">
        <title>Structure of the 30S ribosomal subunit.</title>
        <authorList>
            <person name="Wimberly B.T."/>
            <person name="Brodersen D.E."/>
            <person name="Clemons W.M. Jr."/>
            <person name="Morgan-Warren R.J."/>
            <person name="Carter A.P."/>
            <person name="Vonrhein C."/>
            <person name="Hartsch T."/>
            <person name="Ramakrishnan V."/>
        </authorList>
    </citation>
    <scope>X-RAY CRYSTALLOGRAPHY (3.05 ANGSTROMS) OF THE 30S SUBUNIT</scope>
</reference>
<reference key="5">
    <citation type="journal article" date="2000" name="Cell">
        <title>Structure of functionally activated small ribosomal subunit at 3.3 A resolution.</title>
        <authorList>
            <person name="Schluenzen F."/>
            <person name="Tocilj A."/>
            <person name="Zarivach R."/>
            <person name="Harms J."/>
            <person name="Gluehmann M."/>
            <person name="Janell D."/>
            <person name="Bashan A."/>
            <person name="Bartels H."/>
            <person name="Agmon I."/>
            <person name="Franceschi F."/>
            <person name="Yonath A."/>
        </authorList>
    </citation>
    <scope>X-RAY CRYSTALLOGRAPHY (3.3 ANGSTROMS) OF THE 30S SUBUNIT</scope>
</reference>
<reference key="6">
    <citation type="journal article" date="2000" name="Cell">
        <title>The structural basis for the action of the antibiotics tetracycline, pactamycin, and hygromycin B on the 30S ribosomal subunit.</title>
        <authorList>
            <person name="Brodersen D.E."/>
            <person name="Clemons W.M. Jr."/>
            <person name="Carter A.P."/>
            <person name="Morgan-Warren R.J."/>
            <person name="Wimberly B.T."/>
            <person name="Ramakrishnan V."/>
        </authorList>
    </citation>
    <scope>X-RAY CRYSTALLOGRAPHY (3.3 ANGSTROMS) OF THE 30S SUBUNIT</scope>
</reference>
<reference key="7">
    <citation type="journal article" date="2000" name="Nature">
        <title>Functional insights from the structure of the 30S ribosomal subunit and its interactions with antibiotics.</title>
        <authorList>
            <person name="Carter A.P."/>
            <person name="Clemons W.M. Jr."/>
            <person name="Brodersen D.E."/>
            <person name="Morgan-Warren R.J."/>
            <person name="Wimberly B.T."/>
            <person name="Ramakrishnan V."/>
        </authorList>
    </citation>
    <scope>X-RAY CRYSTALLOGRAPHY (3.0 ANGSTROMS) OF THE 30S SUBUNIT</scope>
</reference>
<reference key="8">
    <citation type="journal article" date="2001" name="Cell">
        <title>The path of messenger RNA through the ribosome.</title>
        <authorList>
            <person name="Yusupova G.Z."/>
            <person name="Yusupov M.M."/>
            <person name="Cate J.H.D."/>
            <person name="Noller H.F."/>
        </authorList>
    </citation>
    <scope>X-RAY CRYSTALLOGRAPHY (5.0 ANGSTROMS) OF THE RIBOSOME</scope>
</reference>
<reference key="9">
    <citation type="journal article" date="2001" name="EMBO J.">
        <title>Crystal structures of complexes of the small ribosomal subunit with tetracycline, edeine and IF3.</title>
        <authorList>
            <person name="Pioletti M."/>
            <person name="Schluenzen F."/>
            <person name="Harms J."/>
            <person name="Zarivach R."/>
            <person name="Gluehmann M."/>
            <person name="Avila H."/>
            <person name="Bashan A."/>
            <person name="Bartels H."/>
            <person name="Auerbach T."/>
            <person name="Jacobi C."/>
            <person name="Hartsch T."/>
            <person name="Yonath A."/>
            <person name="Franceschi F."/>
        </authorList>
    </citation>
    <scope>X-RAY CRYSTALLOGRAPHY (3.2 ANGSTROMS) OF THE 30S SUBUNIT</scope>
</reference>
<reference key="10">
    <citation type="journal article" date="2001" name="Science">
        <title>Crystal structure of an initiation factor bound to the 30S ribosomal subunit.</title>
        <authorList>
            <person name="Carter A.P."/>
            <person name="Clemons W.M. Jr."/>
            <person name="Brodersen D.E."/>
            <person name="Morgan-Warren R.J."/>
            <person name="Hartsch T."/>
            <person name="Wimberly B.T."/>
            <person name="Ramakrishnan V."/>
        </authorList>
    </citation>
    <scope>X-RAY CRYSTALLOGRAPHY (3.2 ANGSTROMS) OF THE 30S SUBUNIT</scope>
</reference>
<reference key="11">
    <citation type="journal article" date="2001" name="Science">
        <title>Crystal structure of the ribosome at 5.5 A resolution.</title>
        <authorList>
            <person name="Yusupov M.M."/>
            <person name="Yusupova G.Z."/>
            <person name="Baucom A."/>
            <person name="Lieberman K."/>
            <person name="Earnest T.N."/>
            <person name="Cate J.H.D."/>
            <person name="Noller H.F."/>
        </authorList>
    </citation>
    <scope>X-RAY CRYSTALLOGRAPHY (5.5 ANGSTROMS) OF THE RIBOSOME</scope>
</reference>
<reference key="12">
    <citation type="journal article" date="2001" name="Science">
        <title>Recognition of cognate transfer RNA by the 30S ribosomal subunit.</title>
        <authorList>
            <person name="Ogle J.M."/>
            <person name="Brodersen D.E."/>
            <person name="Clemons W.M. Jr."/>
            <person name="Tarry M.J."/>
            <person name="Carter A.P."/>
            <person name="Ramakrishnan V."/>
        </authorList>
    </citation>
    <scope>X-RAY CRYSTALLOGRAPHY (3.11 ANGSTROMS) OF THE 30S SUBUNIT</scope>
</reference>
<reference key="13">
    <citation type="journal article" date="2002" name="J. Mol. Biol.">
        <title>Crystal structure of the 30S ribosomal subunit from Thermus thermophilus: structure of the proteins and their interactions with 16S RNA.</title>
        <authorList>
            <person name="Brodersen D.E."/>
            <person name="Clemons W.M. Jr."/>
            <person name="Carter A.P."/>
            <person name="Wimberly B.T."/>
            <person name="Ramakrishnan V."/>
        </authorList>
    </citation>
    <scope>X-RAY CRYSTALLOGRAPHY (3.05 ANGSTROMS) OF THE 30S SUBUNIT</scope>
</reference>
<reference key="14">
    <citation type="journal article" date="2005" name="Cell">
        <title>Crystal structures of the ribosome in complex with release factors RF1 and RF2 bound to a cognate stop codon.</title>
        <authorList>
            <person name="Petry S."/>
            <person name="Brodersen D.E."/>
            <person name="Murphy F.V."/>
            <person name="Dunham C.M."/>
            <person name="Selmer M."/>
            <person name="Tarry M.J."/>
            <person name="Kelley A.C."/>
            <person name="Ramakrishnan V."/>
        </authorList>
    </citation>
    <scope>X-RAY CRYSTALLOGRAPHY (5.90 ANGSTROMS) OF 70S RIBOSOME IN COMPLEX WITH RF1 OR RF2</scope>
    <scope>SUBUNIT</scope>
</reference>
<reference key="15">
    <citation type="journal article" date="2008" name="Science">
        <title>Insights into translational termination from the structure of RF2 bound to the ribosome.</title>
        <authorList>
            <person name="Weixlbaumer A."/>
            <person name="Jin H."/>
            <person name="Neubauer C."/>
            <person name="Voorhees R.M."/>
            <person name="Petry S."/>
            <person name="Kelley A.C."/>
            <person name="Ramakrishnan V."/>
        </authorList>
    </citation>
    <scope>X-RAY CRYSTALLOGRAPHY (3.45 ANGSTROMS) OF 70S RIBOSOME IN COMPLEX WITH RF2</scope>
    <scope>SUBUNIT</scope>
</reference>
<reference key="16">
    <citation type="journal article" date="2010" name="Proc. Natl. Acad. Sci. U.S.A.">
        <title>Structure of the 70S ribosome bound to release factor 2 and a substrate analog provides insights into catalysis of peptide release.</title>
        <authorList>
            <person name="Jin H."/>
            <person name="Kelley A.C."/>
            <person name="Loakes D."/>
            <person name="Ramakrishnan V."/>
        </authorList>
    </citation>
    <scope>X-RAY CRYSTALLOGRAPHY (3.10 ANGSTROMS) OF 70S RIBOSOME IN COMPLEX WITH RF2</scope>
    <scope>SUBUNIT</scope>
</reference>
<protein>
    <recommendedName>
        <fullName evidence="4">Small ribosomal subunit protein uS3</fullName>
    </recommendedName>
    <alternativeName>
        <fullName>30S ribosomal protein S3</fullName>
    </alternativeName>
</protein>
<gene>
    <name type="primary">rpsC</name>
    <name type="synonym">rps3</name>
    <name type="ordered locus">TTHA1686</name>
</gene>
<comment type="function">
    <text>Binds the lower part of the 30S subunit head. Binds mRNA in the 70S ribosome, positioning it for translation.</text>
</comment>
<comment type="subunit">
    <text>Part of the 30S ribosomal subunit. Forms a tight complex with proteins S10 and S14.</text>
</comment>
<comment type="mass spectrometry"/>
<comment type="similarity">
    <text evidence="4">Belongs to the universal ribosomal protein uS3 family.</text>
</comment>
<feature type="initiator methionine" description="Removed" evidence="3">
    <location>
        <position position="1"/>
    </location>
</feature>
<feature type="chain" id="PRO_0000130223" description="Small ribosomal subunit protein uS3">
    <location>
        <begin position="2"/>
        <end position="239"/>
    </location>
</feature>
<feature type="domain" description="KH type-2">
    <location>
        <begin position="39"/>
        <end position="107"/>
    </location>
</feature>
<feature type="region of interest" description="Disordered" evidence="1">
    <location>
        <begin position="212"/>
        <end position="239"/>
    </location>
</feature>
<feature type="compositionally biased region" description="Basic and acidic residues" evidence="1">
    <location>
        <begin position="215"/>
        <end position="226"/>
    </location>
</feature>
<feature type="compositionally biased region" description="Basic residues" evidence="1">
    <location>
        <begin position="227"/>
        <end position="239"/>
    </location>
</feature>
<feature type="turn" evidence="10">
    <location>
        <begin position="7"/>
        <end position="13"/>
    </location>
</feature>
<feature type="strand" evidence="7">
    <location>
        <begin position="14"/>
        <end position="16"/>
    </location>
</feature>
<feature type="strand" evidence="11">
    <location>
        <begin position="19"/>
        <end position="21"/>
    </location>
</feature>
<feature type="turn" evidence="10">
    <location>
        <begin position="26"/>
        <end position="28"/>
    </location>
</feature>
<feature type="helix" evidence="10">
    <location>
        <begin position="29"/>
        <end position="44"/>
    </location>
</feature>
<feature type="turn" evidence="10">
    <location>
        <begin position="45"/>
        <end position="50"/>
    </location>
</feature>
<feature type="strand" evidence="10">
    <location>
        <begin position="52"/>
        <end position="55"/>
    </location>
</feature>
<feature type="strand" evidence="10">
    <location>
        <begin position="59"/>
        <end position="62"/>
    </location>
</feature>
<feature type="strand" evidence="12">
    <location>
        <begin position="63"/>
        <end position="66"/>
    </location>
</feature>
<feature type="strand" evidence="10">
    <location>
        <begin position="67"/>
        <end position="71"/>
    </location>
</feature>
<feature type="helix" evidence="10">
    <location>
        <begin position="73"/>
        <end position="75"/>
    </location>
</feature>
<feature type="strand" evidence="10">
    <location>
        <begin position="79"/>
        <end position="82"/>
    </location>
</feature>
<feature type="helix" evidence="10">
    <location>
        <begin position="83"/>
        <end position="94"/>
    </location>
</feature>
<feature type="strand" evidence="6">
    <location>
        <begin position="95"/>
        <end position="97"/>
    </location>
</feature>
<feature type="strand" evidence="10">
    <location>
        <begin position="102"/>
        <end position="105"/>
    </location>
</feature>
<feature type="helix" evidence="5">
    <location>
        <begin position="109"/>
        <end position="111"/>
    </location>
</feature>
<feature type="helix" evidence="10">
    <location>
        <begin position="113"/>
        <end position="125"/>
    </location>
</feature>
<feature type="helix" evidence="10">
    <location>
        <begin position="130"/>
        <end position="143"/>
    </location>
</feature>
<feature type="strand" evidence="10">
    <location>
        <begin position="147"/>
        <end position="153"/>
    </location>
</feature>
<feature type="turn" evidence="10">
    <location>
        <begin position="157"/>
        <end position="159"/>
    </location>
</feature>
<feature type="strand" evidence="10">
    <location>
        <begin position="169"/>
        <end position="171"/>
    </location>
</feature>
<feature type="strand" evidence="8">
    <location>
        <begin position="175"/>
        <end position="177"/>
    </location>
</feature>
<feature type="helix" evidence="10">
    <location>
        <begin position="178"/>
        <end position="180"/>
    </location>
</feature>
<feature type="strand" evidence="10">
    <location>
        <begin position="182"/>
        <end position="187"/>
    </location>
</feature>
<feature type="strand" evidence="9">
    <location>
        <begin position="188"/>
        <end position="190"/>
    </location>
</feature>
<feature type="strand" evidence="9">
    <location>
        <begin position="195"/>
        <end position="197"/>
    </location>
</feature>
<feature type="strand" evidence="10">
    <location>
        <begin position="198"/>
        <end position="203"/>
    </location>
</feature>
<proteinExistence type="evidence at protein level"/>
<accession>P80372</accession>
<accession>Q5SHP4</accession>
<accession>Q9ACK0</accession>
<keyword id="KW-0002">3D-structure</keyword>
<keyword id="KW-0903">Direct protein sequencing</keyword>
<keyword id="KW-1185">Reference proteome</keyword>
<keyword id="KW-0687">Ribonucleoprotein</keyword>
<keyword id="KW-0689">Ribosomal protein</keyword>
<keyword id="KW-0694">RNA-binding</keyword>
<keyword id="KW-0699">rRNA-binding</keyword>
<name>RS3_THET8</name>
<dbReference type="EMBL" id="AP008226">
    <property type="protein sequence ID" value="BAD71509.1"/>
    <property type="molecule type" value="Genomic_DNA"/>
</dbReference>
<dbReference type="RefSeq" id="WP_008633418.1">
    <property type="nucleotide sequence ID" value="NC_006461.1"/>
</dbReference>
<dbReference type="RefSeq" id="YP_144952.1">
    <property type="nucleotide sequence ID" value="NC_006461.1"/>
</dbReference>
<dbReference type="PDB" id="1FJG">
    <property type="method" value="X-ray"/>
    <property type="resolution" value="3.00 A"/>
    <property type="chains" value="C=1-239"/>
</dbReference>
<dbReference type="PDB" id="1HNW">
    <property type="method" value="X-ray"/>
    <property type="resolution" value="3.40 A"/>
    <property type="chains" value="C=1-239"/>
</dbReference>
<dbReference type="PDB" id="1HNX">
    <property type="method" value="X-ray"/>
    <property type="resolution" value="3.40 A"/>
    <property type="chains" value="C=1-239"/>
</dbReference>
<dbReference type="PDB" id="1HNZ">
    <property type="method" value="X-ray"/>
    <property type="resolution" value="3.30 A"/>
    <property type="chains" value="C=1-239"/>
</dbReference>
<dbReference type="PDB" id="1HR0">
    <property type="method" value="X-ray"/>
    <property type="resolution" value="3.20 A"/>
    <property type="chains" value="C=1-239"/>
</dbReference>
<dbReference type="PDB" id="1I94">
    <property type="method" value="X-ray"/>
    <property type="resolution" value="3.20 A"/>
    <property type="chains" value="C=2-239"/>
</dbReference>
<dbReference type="PDB" id="1I95">
    <property type="method" value="X-ray"/>
    <property type="resolution" value="4.50 A"/>
    <property type="chains" value="C=2-239"/>
</dbReference>
<dbReference type="PDB" id="1I96">
    <property type="method" value="X-ray"/>
    <property type="resolution" value="4.20 A"/>
    <property type="chains" value="C=2-239"/>
</dbReference>
<dbReference type="PDB" id="1I97">
    <property type="method" value="X-ray"/>
    <property type="resolution" value="4.50 A"/>
    <property type="chains" value="C=2-239"/>
</dbReference>
<dbReference type="PDB" id="1IBK">
    <property type="method" value="X-ray"/>
    <property type="resolution" value="3.31 A"/>
    <property type="chains" value="C=1-239"/>
</dbReference>
<dbReference type="PDB" id="1IBL">
    <property type="method" value="X-ray"/>
    <property type="resolution" value="3.11 A"/>
    <property type="chains" value="C=1-239"/>
</dbReference>
<dbReference type="PDB" id="1IBM">
    <property type="method" value="X-ray"/>
    <property type="resolution" value="3.31 A"/>
    <property type="chains" value="C=1-239"/>
</dbReference>
<dbReference type="PDB" id="1J5E">
    <property type="method" value="X-ray"/>
    <property type="resolution" value="3.05 A"/>
    <property type="chains" value="C=1-239"/>
</dbReference>
<dbReference type="PDB" id="1JGO">
    <property type="method" value="X-ray"/>
    <property type="resolution" value="5.60 A"/>
    <property type="chains" value="F=1-239"/>
</dbReference>
<dbReference type="PDB" id="1JGP">
    <property type="method" value="X-ray"/>
    <property type="resolution" value="7.00 A"/>
    <property type="chains" value="F=1-239"/>
</dbReference>
<dbReference type="PDB" id="1JGQ">
    <property type="method" value="X-ray"/>
    <property type="resolution" value="5.00 A"/>
    <property type="chains" value="F=1-239"/>
</dbReference>
<dbReference type="PDB" id="1ML5">
    <property type="method" value="EM"/>
    <property type="resolution" value="14.00 A"/>
    <property type="chains" value="F=1-239"/>
</dbReference>
<dbReference type="PDB" id="1N32">
    <property type="method" value="X-ray"/>
    <property type="resolution" value="3.00 A"/>
    <property type="chains" value="C=1-239"/>
</dbReference>
<dbReference type="PDB" id="1N33">
    <property type="method" value="X-ray"/>
    <property type="resolution" value="3.35 A"/>
    <property type="chains" value="C=1-239"/>
</dbReference>
<dbReference type="PDB" id="1N34">
    <property type="method" value="X-ray"/>
    <property type="resolution" value="3.80 A"/>
    <property type="chains" value="C=1-239"/>
</dbReference>
<dbReference type="PDB" id="1N36">
    <property type="method" value="X-ray"/>
    <property type="resolution" value="3.65 A"/>
    <property type="chains" value="C=1-239"/>
</dbReference>
<dbReference type="PDB" id="1VVJ">
    <property type="method" value="X-ray"/>
    <property type="resolution" value="3.44 A"/>
    <property type="chains" value="QC/XC=1-239"/>
</dbReference>
<dbReference type="PDB" id="1VY4">
    <property type="method" value="X-ray"/>
    <property type="resolution" value="2.60 A"/>
    <property type="chains" value="AC/CC=1-239"/>
</dbReference>
<dbReference type="PDB" id="1VY5">
    <property type="method" value="X-ray"/>
    <property type="resolution" value="2.55 A"/>
    <property type="chains" value="AC/CC=1-239"/>
</dbReference>
<dbReference type="PDB" id="1VY6">
    <property type="method" value="X-ray"/>
    <property type="resolution" value="2.90 A"/>
    <property type="chains" value="AC/CC=1-239"/>
</dbReference>
<dbReference type="PDB" id="1VY7">
    <property type="method" value="X-ray"/>
    <property type="resolution" value="2.80 A"/>
    <property type="chains" value="AC/CC=1-239"/>
</dbReference>
<dbReference type="PDB" id="1XMO">
    <property type="method" value="X-ray"/>
    <property type="resolution" value="3.25 A"/>
    <property type="chains" value="C=1-239"/>
</dbReference>
<dbReference type="PDB" id="1XMQ">
    <property type="method" value="X-ray"/>
    <property type="resolution" value="3.00 A"/>
    <property type="chains" value="C=1-239"/>
</dbReference>
<dbReference type="PDB" id="1XNQ">
    <property type="method" value="X-ray"/>
    <property type="resolution" value="3.05 A"/>
    <property type="chains" value="C=1-239"/>
</dbReference>
<dbReference type="PDB" id="1XNR">
    <property type="method" value="X-ray"/>
    <property type="resolution" value="3.10 A"/>
    <property type="chains" value="C=1-239"/>
</dbReference>
<dbReference type="PDB" id="2E5L">
    <property type="method" value="X-ray"/>
    <property type="resolution" value="3.30 A"/>
    <property type="chains" value="C=2-239"/>
</dbReference>
<dbReference type="PDB" id="2F4V">
    <property type="method" value="X-ray"/>
    <property type="resolution" value="3.80 A"/>
    <property type="chains" value="C=1-239"/>
</dbReference>
<dbReference type="PDB" id="2HHH">
    <property type="method" value="X-ray"/>
    <property type="resolution" value="3.35 A"/>
    <property type="chains" value="C=1-239"/>
</dbReference>
<dbReference type="PDB" id="2UU9">
    <property type="method" value="X-ray"/>
    <property type="resolution" value="3.10 A"/>
    <property type="chains" value="C=2-239"/>
</dbReference>
<dbReference type="PDB" id="2UUA">
    <property type="method" value="X-ray"/>
    <property type="resolution" value="2.90 A"/>
    <property type="chains" value="C=2-239"/>
</dbReference>
<dbReference type="PDB" id="2UUB">
    <property type="method" value="X-ray"/>
    <property type="resolution" value="2.80 A"/>
    <property type="chains" value="C=2-239"/>
</dbReference>
<dbReference type="PDB" id="2UUC">
    <property type="method" value="X-ray"/>
    <property type="resolution" value="3.10 A"/>
    <property type="chains" value="C=2-239"/>
</dbReference>
<dbReference type="PDB" id="2UXB">
    <property type="method" value="X-ray"/>
    <property type="resolution" value="3.10 A"/>
    <property type="chains" value="C=2-239"/>
</dbReference>
<dbReference type="PDB" id="2UXC">
    <property type="method" value="X-ray"/>
    <property type="resolution" value="2.90 A"/>
    <property type="chains" value="C=2-239"/>
</dbReference>
<dbReference type="PDB" id="2UXD">
    <property type="method" value="X-ray"/>
    <property type="resolution" value="3.20 A"/>
    <property type="chains" value="C=2-239"/>
</dbReference>
<dbReference type="PDB" id="2VQE">
    <property type="method" value="X-ray"/>
    <property type="resolution" value="2.50 A"/>
    <property type="chains" value="C=1-239"/>
</dbReference>
<dbReference type="PDB" id="2VQF">
    <property type="method" value="X-ray"/>
    <property type="resolution" value="2.90 A"/>
    <property type="chains" value="C=1-239"/>
</dbReference>
<dbReference type="PDB" id="2ZM6">
    <property type="method" value="X-ray"/>
    <property type="resolution" value="3.30 A"/>
    <property type="chains" value="C=2-239"/>
</dbReference>
<dbReference type="PDB" id="3OTO">
    <property type="method" value="X-ray"/>
    <property type="resolution" value="3.69 A"/>
    <property type="chains" value="C=1-239"/>
</dbReference>
<dbReference type="PDB" id="3T1H">
    <property type="method" value="X-ray"/>
    <property type="resolution" value="3.11 A"/>
    <property type="chains" value="C=1-239"/>
</dbReference>
<dbReference type="PDB" id="3T1Y">
    <property type="method" value="X-ray"/>
    <property type="resolution" value="2.80 A"/>
    <property type="chains" value="C=1-239"/>
</dbReference>
<dbReference type="PDB" id="4AQY">
    <property type="method" value="X-ray"/>
    <property type="resolution" value="3.50 A"/>
    <property type="chains" value="C=1-239"/>
</dbReference>
<dbReference type="PDB" id="4B3M">
    <property type="method" value="X-ray"/>
    <property type="resolution" value="2.90 A"/>
    <property type="chains" value="C=1-239"/>
</dbReference>
<dbReference type="PDB" id="4B3R">
    <property type="method" value="X-ray"/>
    <property type="resolution" value="3.00 A"/>
    <property type="chains" value="C=1-239"/>
</dbReference>
<dbReference type="PDB" id="4B3S">
    <property type="method" value="X-ray"/>
    <property type="resolution" value="3.15 A"/>
    <property type="chains" value="C=1-239"/>
</dbReference>
<dbReference type="PDB" id="4B3T">
    <property type="method" value="X-ray"/>
    <property type="resolution" value="3.00 A"/>
    <property type="chains" value="C=1-239"/>
</dbReference>
<dbReference type="PDB" id="4DR1">
    <property type="method" value="X-ray"/>
    <property type="resolution" value="3.60 A"/>
    <property type="chains" value="C=1-239"/>
</dbReference>
<dbReference type="PDB" id="4DR2">
    <property type="method" value="X-ray"/>
    <property type="resolution" value="3.25 A"/>
    <property type="chains" value="C=1-239"/>
</dbReference>
<dbReference type="PDB" id="4DR3">
    <property type="method" value="X-ray"/>
    <property type="resolution" value="3.35 A"/>
    <property type="chains" value="C=1-239"/>
</dbReference>
<dbReference type="PDB" id="4DR4">
    <property type="method" value="X-ray"/>
    <property type="resolution" value="3.97 A"/>
    <property type="chains" value="C=1-239"/>
</dbReference>
<dbReference type="PDB" id="4DR5">
    <property type="method" value="X-ray"/>
    <property type="resolution" value="3.45 A"/>
    <property type="chains" value="C=1-239"/>
</dbReference>
<dbReference type="PDB" id="4DR6">
    <property type="method" value="X-ray"/>
    <property type="resolution" value="3.30 A"/>
    <property type="chains" value="C=1-239"/>
</dbReference>
<dbReference type="PDB" id="4DR7">
    <property type="method" value="X-ray"/>
    <property type="resolution" value="3.75 A"/>
    <property type="chains" value="C=1-239"/>
</dbReference>
<dbReference type="PDB" id="4DUY">
    <property type="method" value="X-ray"/>
    <property type="resolution" value="3.39 A"/>
    <property type="chains" value="C=1-239"/>
</dbReference>
<dbReference type="PDB" id="4DUZ">
    <property type="method" value="X-ray"/>
    <property type="resolution" value="3.65 A"/>
    <property type="chains" value="C=1-239"/>
</dbReference>
<dbReference type="PDB" id="4DV0">
    <property type="method" value="X-ray"/>
    <property type="resolution" value="3.85 A"/>
    <property type="chains" value="C=1-239"/>
</dbReference>
<dbReference type="PDB" id="4DV1">
    <property type="method" value="X-ray"/>
    <property type="resolution" value="3.85 A"/>
    <property type="chains" value="C=1-239"/>
</dbReference>
<dbReference type="PDB" id="4DV2">
    <property type="method" value="X-ray"/>
    <property type="resolution" value="3.65 A"/>
    <property type="chains" value="C=1-239"/>
</dbReference>
<dbReference type="PDB" id="4DV3">
    <property type="method" value="X-ray"/>
    <property type="resolution" value="3.55 A"/>
    <property type="chains" value="C=1-239"/>
</dbReference>
<dbReference type="PDB" id="4DV4">
    <property type="method" value="X-ray"/>
    <property type="resolution" value="3.65 A"/>
    <property type="chains" value="C=1-239"/>
</dbReference>
<dbReference type="PDB" id="4DV5">
    <property type="method" value="X-ray"/>
    <property type="resolution" value="3.68 A"/>
    <property type="chains" value="C=1-239"/>
</dbReference>
<dbReference type="PDB" id="4DV6">
    <property type="method" value="X-ray"/>
    <property type="resolution" value="3.30 A"/>
    <property type="chains" value="C=1-239"/>
</dbReference>
<dbReference type="PDB" id="4DV7">
    <property type="method" value="X-ray"/>
    <property type="resolution" value="3.29 A"/>
    <property type="chains" value="C=1-239"/>
</dbReference>
<dbReference type="PDB" id="4GKJ">
    <property type="method" value="X-ray"/>
    <property type="resolution" value="3.30 A"/>
    <property type="chains" value="C=2-207"/>
</dbReference>
<dbReference type="PDB" id="4GKK">
    <property type="method" value="X-ray"/>
    <property type="resolution" value="3.20 A"/>
    <property type="chains" value="C=2-207"/>
</dbReference>
<dbReference type="PDB" id="4JI0">
    <property type="method" value="X-ray"/>
    <property type="resolution" value="3.49 A"/>
    <property type="chains" value="C=1-239"/>
</dbReference>
<dbReference type="PDB" id="4JI1">
    <property type="method" value="X-ray"/>
    <property type="resolution" value="3.14 A"/>
    <property type="chains" value="C=1-239"/>
</dbReference>
<dbReference type="PDB" id="4JI2">
    <property type="method" value="X-ray"/>
    <property type="resolution" value="3.64 A"/>
    <property type="chains" value="C=1-239"/>
</dbReference>
<dbReference type="PDB" id="4JI3">
    <property type="method" value="X-ray"/>
    <property type="resolution" value="3.35 A"/>
    <property type="chains" value="C=1-239"/>
</dbReference>
<dbReference type="PDB" id="4JI4">
    <property type="method" value="X-ray"/>
    <property type="resolution" value="3.69 A"/>
    <property type="chains" value="C=1-239"/>
</dbReference>
<dbReference type="PDB" id="4JI5">
    <property type="method" value="X-ray"/>
    <property type="resolution" value="3.85 A"/>
    <property type="chains" value="C=1-239"/>
</dbReference>
<dbReference type="PDB" id="4JI6">
    <property type="method" value="X-ray"/>
    <property type="resolution" value="3.55 A"/>
    <property type="chains" value="C=1-239"/>
</dbReference>
<dbReference type="PDB" id="4JI7">
    <property type="method" value="X-ray"/>
    <property type="resolution" value="3.50 A"/>
    <property type="chains" value="C=1-239"/>
</dbReference>
<dbReference type="PDB" id="4JI8">
    <property type="method" value="X-ray"/>
    <property type="resolution" value="3.74 A"/>
    <property type="chains" value="C=1-239"/>
</dbReference>
<dbReference type="PDB" id="4JV5">
    <property type="method" value="X-ray"/>
    <property type="resolution" value="3.16 A"/>
    <property type="chains" value="C=2-207"/>
</dbReference>
<dbReference type="PDB" id="4JYA">
    <property type="method" value="X-ray"/>
    <property type="resolution" value="3.10 A"/>
    <property type="chains" value="C=2-207"/>
</dbReference>
<dbReference type="PDB" id="4K0K">
    <property type="method" value="X-ray"/>
    <property type="resolution" value="3.40 A"/>
    <property type="chains" value="C=2-208"/>
</dbReference>
<dbReference type="PDB" id="4KHP">
    <property type="method" value="X-ray"/>
    <property type="resolution" value="3.10 A"/>
    <property type="chains" value="C=2-207"/>
</dbReference>
<dbReference type="PDB" id="4L47">
    <property type="method" value="X-ray"/>
    <property type="resolution" value="3.22 A"/>
    <property type="chains" value="QC/XC=1-239"/>
</dbReference>
<dbReference type="PDB" id="4L71">
    <property type="method" value="X-ray"/>
    <property type="resolution" value="3.90 A"/>
    <property type="chains" value="QC/XC=1-239"/>
</dbReference>
<dbReference type="PDB" id="4LEL">
    <property type="method" value="X-ray"/>
    <property type="resolution" value="3.90 A"/>
    <property type="chains" value="QC/XC=1-239"/>
</dbReference>
<dbReference type="PDB" id="4LF4">
    <property type="method" value="X-ray"/>
    <property type="resolution" value="3.34 A"/>
    <property type="chains" value="C=1-239"/>
</dbReference>
<dbReference type="PDB" id="4LF5">
    <property type="method" value="X-ray"/>
    <property type="resolution" value="3.75 A"/>
    <property type="chains" value="C=1-239"/>
</dbReference>
<dbReference type="PDB" id="4LF6">
    <property type="method" value="X-ray"/>
    <property type="resolution" value="3.31 A"/>
    <property type="chains" value="C=1-239"/>
</dbReference>
<dbReference type="PDB" id="4LF7">
    <property type="method" value="X-ray"/>
    <property type="resolution" value="3.15 A"/>
    <property type="chains" value="C=1-239"/>
</dbReference>
<dbReference type="PDB" id="4LF8">
    <property type="method" value="X-ray"/>
    <property type="resolution" value="3.15 A"/>
    <property type="chains" value="C=1-239"/>
</dbReference>
<dbReference type="PDB" id="4LF9">
    <property type="method" value="X-ray"/>
    <property type="resolution" value="3.28 A"/>
    <property type="chains" value="C=1-239"/>
</dbReference>
<dbReference type="PDB" id="4LFA">
    <property type="method" value="X-ray"/>
    <property type="resolution" value="3.65 A"/>
    <property type="chains" value="C=1-239"/>
</dbReference>
<dbReference type="PDB" id="4LFB">
    <property type="method" value="X-ray"/>
    <property type="resolution" value="3.01 A"/>
    <property type="chains" value="C=1-239"/>
</dbReference>
<dbReference type="PDB" id="4LFC">
    <property type="method" value="X-ray"/>
    <property type="resolution" value="3.60 A"/>
    <property type="chains" value="C=1-239"/>
</dbReference>
<dbReference type="PDB" id="4LFZ">
    <property type="method" value="X-ray"/>
    <property type="resolution" value="3.92 A"/>
    <property type="chains" value="QC/XC=1-239"/>
</dbReference>
<dbReference type="PDB" id="4LNT">
    <property type="method" value="X-ray"/>
    <property type="resolution" value="2.94 A"/>
    <property type="chains" value="QC/XC=1-239"/>
</dbReference>
<dbReference type="PDB" id="4LSK">
    <property type="method" value="X-ray"/>
    <property type="resolution" value="3.48 A"/>
    <property type="chains" value="QC/XC=1-239"/>
</dbReference>
<dbReference type="PDB" id="4LT8">
    <property type="method" value="X-ray"/>
    <property type="resolution" value="3.14 A"/>
    <property type="chains" value="QC/XC=1-239"/>
</dbReference>
<dbReference type="PDB" id="4NXM">
    <property type="method" value="X-ray"/>
    <property type="resolution" value="3.65 A"/>
    <property type="chains" value="C=1-239"/>
</dbReference>
<dbReference type="PDB" id="4NXN">
    <property type="method" value="X-ray"/>
    <property type="resolution" value="3.54 A"/>
    <property type="chains" value="C=1-239"/>
</dbReference>
<dbReference type="PDB" id="4OX9">
    <property type="method" value="X-ray"/>
    <property type="resolution" value="3.80 A"/>
    <property type="chains" value="C=1-239"/>
</dbReference>
<dbReference type="PDB" id="4P6F">
    <property type="method" value="X-ray"/>
    <property type="resolution" value="3.60 A"/>
    <property type="chains" value="QC/XC=1-239"/>
</dbReference>
<dbReference type="PDB" id="4P70">
    <property type="method" value="X-ray"/>
    <property type="resolution" value="3.68 A"/>
    <property type="chains" value="QC/XC=1-239"/>
</dbReference>
<dbReference type="PDB" id="4TUA">
    <property type="method" value="X-ray"/>
    <property type="resolution" value="3.60 A"/>
    <property type="chains" value="QC/XC=1-239"/>
</dbReference>
<dbReference type="PDB" id="4TUB">
    <property type="method" value="X-ray"/>
    <property type="resolution" value="3.60 A"/>
    <property type="chains" value="QC/XC=1-239"/>
</dbReference>
<dbReference type="PDB" id="4TUC">
    <property type="method" value="X-ray"/>
    <property type="resolution" value="3.60 A"/>
    <property type="chains" value="QC/XC=1-239"/>
</dbReference>
<dbReference type="PDB" id="4TUD">
    <property type="method" value="X-ray"/>
    <property type="resolution" value="3.60 A"/>
    <property type="chains" value="QC/XC=1-239"/>
</dbReference>
<dbReference type="PDB" id="4TUE">
    <property type="method" value="X-ray"/>
    <property type="resolution" value="3.50 A"/>
    <property type="chains" value="QC/XC=1-239"/>
</dbReference>
<dbReference type="PDB" id="4V42">
    <property type="method" value="X-ray"/>
    <property type="resolution" value="5.50 A"/>
    <property type="chains" value="AF=1-239"/>
</dbReference>
<dbReference type="PDB" id="4V49">
    <property type="method" value="X-ray"/>
    <property type="resolution" value="8.70 A"/>
    <property type="chains" value="C=2-207"/>
</dbReference>
<dbReference type="PDB" id="4V4A">
    <property type="method" value="X-ray"/>
    <property type="resolution" value="9.50 A"/>
    <property type="chains" value="C=2-207"/>
</dbReference>
<dbReference type="PDB" id="4V4P">
    <property type="method" value="X-ray"/>
    <property type="resolution" value="5.50 A"/>
    <property type="chains" value="F=1-239"/>
</dbReference>
<dbReference type="PDB" id="4V4R">
    <property type="method" value="X-ray"/>
    <property type="resolution" value="5.90 A"/>
    <property type="chains" value="AC=1-239"/>
</dbReference>
<dbReference type="PDB" id="4V4S">
    <property type="method" value="X-ray"/>
    <property type="resolution" value="6.76 A"/>
    <property type="chains" value="AC=1-239"/>
</dbReference>
<dbReference type="PDB" id="4V4T">
    <property type="method" value="X-ray"/>
    <property type="resolution" value="6.46 A"/>
    <property type="chains" value="AC=1-239"/>
</dbReference>
<dbReference type="PDB" id="4V4X">
    <property type="method" value="X-ray"/>
    <property type="resolution" value="5.00 A"/>
    <property type="chains" value="AF=1-239"/>
</dbReference>
<dbReference type="PDB" id="4V4Y">
    <property type="method" value="X-ray"/>
    <property type="resolution" value="5.50 A"/>
    <property type="chains" value="AF=1-239"/>
</dbReference>
<dbReference type="PDB" id="4V4Z">
    <property type="method" value="X-ray"/>
    <property type="resolution" value="4.51 A"/>
    <property type="chains" value="AF=1-239"/>
</dbReference>
<dbReference type="PDB" id="4V51">
    <property type="method" value="X-ray"/>
    <property type="resolution" value="2.80 A"/>
    <property type="chains" value="AC/CC=2-239"/>
</dbReference>
<dbReference type="PDB" id="4V5A">
    <property type="method" value="X-ray"/>
    <property type="resolution" value="3.50 A"/>
    <property type="chains" value="AC/CC=2-239"/>
</dbReference>
<dbReference type="PDB" id="4V5C">
    <property type="method" value="X-ray"/>
    <property type="resolution" value="3.30 A"/>
    <property type="chains" value="AC/CC=1-239"/>
</dbReference>
<dbReference type="PDB" id="4V5D">
    <property type="method" value="X-ray"/>
    <property type="resolution" value="3.50 A"/>
    <property type="chains" value="AC/CC=1-239"/>
</dbReference>
<dbReference type="PDB" id="4V5E">
    <property type="method" value="X-ray"/>
    <property type="resolution" value="3.45 A"/>
    <property type="chains" value="AC/CC=1-239"/>
</dbReference>
<dbReference type="PDB" id="4V5F">
    <property type="method" value="X-ray"/>
    <property type="resolution" value="3.60 A"/>
    <property type="chains" value="AC/CC=1-239"/>
</dbReference>
<dbReference type="PDB" id="4V5G">
    <property type="method" value="X-ray"/>
    <property type="resolution" value="3.60 A"/>
    <property type="chains" value="AC/CC=1-239"/>
</dbReference>
<dbReference type="PDB" id="4V5J">
    <property type="method" value="X-ray"/>
    <property type="resolution" value="3.10 A"/>
    <property type="chains" value="AC/CC=1-239"/>
</dbReference>
<dbReference type="PDB" id="4V5K">
    <property type="method" value="X-ray"/>
    <property type="resolution" value="3.20 A"/>
    <property type="chains" value="AC/CC=1-239"/>
</dbReference>
<dbReference type="PDB" id="4V5L">
    <property type="method" value="X-ray"/>
    <property type="resolution" value="3.10 A"/>
    <property type="chains" value="AC=1-239"/>
</dbReference>
<dbReference type="PDB" id="4V5M">
    <property type="method" value="EM"/>
    <property type="resolution" value="7.80 A"/>
    <property type="chains" value="AC=1-239"/>
</dbReference>
<dbReference type="PDB" id="4V5N">
    <property type="method" value="EM"/>
    <property type="resolution" value="7.60 A"/>
    <property type="chains" value="AC=1-239"/>
</dbReference>
<dbReference type="PDB" id="4V5P">
    <property type="method" value="X-ray"/>
    <property type="resolution" value="3.10 A"/>
    <property type="chains" value="AC/CC=1-239"/>
</dbReference>
<dbReference type="PDB" id="4V5Q">
    <property type="method" value="X-ray"/>
    <property type="resolution" value="3.10 A"/>
    <property type="chains" value="AC/CC=1-239"/>
</dbReference>
<dbReference type="PDB" id="4V5R">
    <property type="method" value="X-ray"/>
    <property type="resolution" value="3.10 A"/>
    <property type="chains" value="AC/CC=1-239"/>
</dbReference>
<dbReference type="PDB" id="4V5S">
    <property type="method" value="X-ray"/>
    <property type="resolution" value="3.10 A"/>
    <property type="chains" value="AC/CC=1-239"/>
</dbReference>
<dbReference type="PDB" id="4V68">
    <property type="method" value="EM"/>
    <property type="resolution" value="6.40 A"/>
    <property type="chains" value="AC=2-208"/>
</dbReference>
<dbReference type="PDB" id="4V6A">
    <property type="method" value="X-ray"/>
    <property type="resolution" value="3.10 A"/>
    <property type="chains" value="AC/CC=1-239"/>
</dbReference>
<dbReference type="PDB" id="4V6F">
    <property type="method" value="X-ray"/>
    <property type="resolution" value="3.10 A"/>
    <property type="chains" value="BF/CF=1-239"/>
</dbReference>
<dbReference type="PDB" id="4V6G">
    <property type="method" value="X-ray"/>
    <property type="resolution" value="3.50 A"/>
    <property type="chains" value="AF/CF=1-239"/>
</dbReference>
<dbReference type="PDB" id="4V7J">
    <property type="method" value="X-ray"/>
    <property type="resolution" value="3.30 A"/>
    <property type="chains" value="Ac/Bc=1-239"/>
</dbReference>
<dbReference type="PDB" id="4V7K">
    <property type="method" value="X-ray"/>
    <property type="resolution" value="3.60 A"/>
    <property type="chains" value="Ac/Bc=1-239"/>
</dbReference>
<dbReference type="PDB" id="4V7L">
    <property type="method" value="X-ray"/>
    <property type="resolution" value="3.00 A"/>
    <property type="chains" value="AC/CC=1-239"/>
</dbReference>
<dbReference type="PDB" id="4V7M">
    <property type="method" value="X-ray"/>
    <property type="resolution" value="3.45 A"/>
    <property type="chains" value="AC/CC=1-239"/>
</dbReference>
<dbReference type="PDB" id="4V7W">
    <property type="method" value="X-ray"/>
    <property type="resolution" value="3.00 A"/>
    <property type="chains" value="AC/CC=1-239"/>
</dbReference>
<dbReference type="PDB" id="4V7X">
    <property type="method" value="X-ray"/>
    <property type="resolution" value="3.00 A"/>
    <property type="chains" value="AC/CC=1-239"/>
</dbReference>
<dbReference type="PDB" id="4V7Y">
    <property type="method" value="X-ray"/>
    <property type="resolution" value="3.00 A"/>
    <property type="chains" value="AC/CC=1-239"/>
</dbReference>
<dbReference type="PDB" id="4V7Z">
    <property type="method" value="X-ray"/>
    <property type="resolution" value="3.10 A"/>
    <property type="chains" value="AC/CC=1-239"/>
</dbReference>
<dbReference type="PDB" id="4V87">
    <property type="method" value="X-ray"/>
    <property type="resolution" value="3.10 A"/>
    <property type="chains" value="BF/CF=1-239"/>
</dbReference>
<dbReference type="PDB" id="4V8A">
    <property type="method" value="X-ray"/>
    <property type="resolution" value="3.20 A"/>
    <property type="chains" value="CC/DC=1-239"/>
</dbReference>
<dbReference type="PDB" id="4V8B">
    <property type="method" value="X-ray"/>
    <property type="resolution" value="3.00 A"/>
    <property type="chains" value="AF/CF=1-239"/>
</dbReference>
<dbReference type="PDB" id="4V8C">
    <property type="method" value="X-ray"/>
    <property type="resolution" value="3.30 A"/>
    <property type="chains" value="CF/DF=1-239"/>
</dbReference>
<dbReference type="PDB" id="4V8D">
    <property type="method" value="X-ray"/>
    <property type="resolution" value="3.00 A"/>
    <property type="chains" value="AF/CF=1-239"/>
</dbReference>
<dbReference type="PDB" id="4V8E">
    <property type="method" value="X-ray"/>
    <property type="resolution" value="3.30 A"/>
    <property type="chains" value="BF/DF=1-239"/>
</dbReference>
<dbReference type="PDB" id="4V8F">
    <property type="method" value="X-ray"/>
    <property type="resolution" value="3.30 A"/>
    <property type="chains" value="BF/CF=1-239"/>
</dbReference>
<dbReference type="PDB" id="4V8G">
    <property type="method" value="X-ray"/>
    <property type="resolution" value="3.00 A"/>
    <property type="chains" value="AC/CC=1-239"/>
</dbReference>
<dbReference type="PDB" id="4V8H">
    <property type="method" value="X-ray"/>
    <property type="resolution" value="3.10 A"/>
    <property type="chains" value="AC/CC=1-239"/>
</dbReference>
<dbReference type="PDB" id="4V8I">
    <property type="method" value="X-ray"/>
    <property type="resolution" value="2.70 A"/>
    <property type="chains" value="AC/CC=1-239"/>
</dbReference>
<dbReference type="PDB" id="4V8J">
    <property type="method" value="X-ray"/>
    <property type="resolution" value="3.90 A"/>
    <property type="chains" value="AC/CC=1-239"/>
</dbReference>
<dbReference type="PDB" id="4V8N">
    <property type="method" value="X-ray"/>
    <property type="resolution" value="3.10 A"/>
    <property type="chains" value="AC/CC=1-239"/>
</dbReference>
<dbReference type="PDB" id="4V8O">
    <property type="method" value="X-ray"/>
    <property type="resolution" value="3.80 A"/>
    <property type="chains" value="AC=1-239"/>
</dbReference>
<dbReference type="PDB" id="4V8Q">
    <property type="method" value="X-ray"/>
    <property type="resolution" value="3.10 A"/>
    <property type="chains" value="BC=1-239"/>
</dbReference>
<dbReference type="PDB" id="4V8U">
    <property type="method" value="X-ray"/>
    <property type="resolution" value="3.70 A"/>
    <property type="chains" value="AC/CC=1-239"/>
</dbReference>
<dbReference type="PDB" id="4V8X">
    <property type="method" value="X-ray"/>
    <property type="resolution" value="3.35 A"/>
    <property type="chains" value="AC/CC=1-239"/>
</dbReference>
<dbReference type="PDB" id="4V90">
    <property type="method" value="X-ray"/>
    <property type="resolution" value="2.95 A"/>
    <property type="chains" value="AC=1-239"/>
</dbReference>
<dbReference type="PDB" id="4V95">
    <property type="method" value="X-ray"/>
    <property type="resolution" value="3.20 A"/>
    <property type="chains" value="AC/CC=1-239"/>
</dbReference>
<dbReference type="PDB" id="4V97">
    <property type="method" value="X-ray"/>
    <property type="resolution" value="3.52 A"/>
    <property type="chains" value="AC/CC=1-239"/>
</dbReference>
<dbReference type="PDB" id="4V9A">
    <property type="method" value="X-ray"/>
    <property type="resolution" value="3.30 A"/>
    <property type="chains" value="AF/CF=1-239"/>
</dbReference>
<dbReference type="PDB" id="4V9B">
    <property type="method" value="X-ray"/>
    <property type="resolution" value="3.10 A"/>
    <property type="chains" value="AF/CF=1-239"/>
</dbReference>
<dbReference type="PDB" id="4V9H">
    <property type="method" value="X-ray"/>
    <property type="resolution" value="2.86 A"/>
    <property type="chains" value="AC=2-207"/>
</dbReference>
<dbReference type="PDB" id="4V9I">
    <property type="method" value="X-ray"/>
    <property type="resolution" value="3.30 A"/>
    <property type="chains" value="AC/CC=2-207"/>
</dbReference>
<dbReference type="PDB" id="4V9R">
    <property type="method" value="X-ray"/>
    <property type="resolution" value="3.00 A"/>
    <property type="chains" value="AC/CC=1-239"/>
</dbReference>
<dbReference type="PDB" id="4V9S">
    <property type="method" value="X-ray"/>
    <property type="resolution" value="3.10 A"/>
    <property type="chains" value="AC/CC=1-239"/>
</dbReference>
<dbReference type="PDB" id="4W2E">
    <property type="method" value="X-ray"/>
    <property type="resolution" value="2.90 A"/>
    <property type="chains" value="c=1-239"/>
</dbReference>
<dbReference type="PDB" id="4W2F">
    <property type="method" value="X-ray"/>
    <property type="resolution" value="2.40 A"/>
    <property type="chains" value="AC/CC=1-239"/>
</dbReference>
<dbReference type="PDB" id="4W2G">
    <property type="method" value="X-ray"/>
    <property type="resolution" value="2.55 A"/>
    <property type="chains" value="AC/CC=1-239"/>
</dbReference>
<dbReference type="PDB" id="4W2H">
    <property type="method" value="X-ray"/>
    <property type="resolution" value="2.70 A"/>
    <property type="chains" value="AC/CC=1-239"/>
</dbReference>
<dbReference type="PDB" id="4W2I">
    <property type="method" value="X-ray"/>
    <property type="resolution" value="2.70 A"/>
    <property type="chains" value="AC/CC=1-239"/>
</dbReference>
<dbReference type="PDB" id="4W4G">
    <property type="method" value="X-ray"/>
    <property type="resolution" value="3.30 A"/>
    <property type="chains" value="QC/XC=1-239"/>
</dbReference>
<dbReference type="PDB" id="4WPO">
    <property type="method" value="X-ray"/>
    <property type="resolution" value="2.80 A"/>
    <property type="chains" value="BC/DC=1-239"/>
</dbReference>
<dbReference type="PDB" id="4WQ1">
    <property type="method" value="X-ray"/>
    <property type="resolution" value="3.10 A"/>
    <property type="chains" value="22/2E=1-239"/>
</dbReference>
<dbReference type="PDB" id="4WQF">
    <property type="method" value="X-ray"/>
    <property type="resolution" value="2.80 A"/>
    <property type="chains" value="BC/DC=1-239"/>
</dbReference>
<dbReference type="PDB" id="4WQR">
    <property type="method" value="X-ray"/>
    <property type="resolution" value="3.15 A"/>
    <property type="chains" value="22/2E=1-239"/>
</dbReference>
<dbReference type="PDB" id="4WQU">
    <property type="method" value="X-ray"/>
    <property type="resolution" value="2.80 A"/>
    <property type="chains" value="BC/DC=1-239"/>
</dbReference>
<dbReference type="PDB" id="4WQY">
    <property type="method" value="X-ray"/>
    <property type="resolution" value="2.80 A"/>
    <property type="chains" value="BC/DC=1-239"/>
</dbReference>
<dbReference type="PDB" id="4WR6">
    <property type="method" value="X-ray"/>
    <property type="resolution" value="3.05 A"/>
    <property type="chains" value="22/2E=1-239"/>
</dbReference>
<dbReference type="PDB" id="4WRA">
    <property type="method" value="X-ray"/>
    <property type="resolution" value="3.05 A"/>
    <property type="chains" value="22/2E=1-239"/>
</dbReference>
<dbReference type="PDB" id="4WRO">
    <property type="method" value="X-ray"/>
    <property type="resolution" value="3.05 A"/>
    <property type="chains" value="22/2E=1-239"/>
</dbReference>
<dbReference type="PDB" id="4WSD">
    <property type="method" value="X-ray"/>
    <property type="resolution" value="2.95 A"/>
    <property type="chains" value="22/2E=1-239"/>
</dbReference>
<dbReference type="PDB" id="4WSM">
    <property type="method" value="X-ray"/>
    <property type="resolution" value="3.30 A"/>
    <property type="chains" value="22/2E=1-239"/>
</dbReference>
<dbReference type="PDB" id="4WT1">
    <property type="method" value="X-ray"/>
    <property type="resolution" value="3.05 A"/>
    <property type="chains" value="22/2E=1-239"/>
</dbReference>
<dbReference type="PDB" id="4WT8">
    <property type="method" value="X-ray"/>
    <property type="resolution" value="3.40 A"/>
    <property type="chains" value="AC=1-238, BC=2-207"/>
</dbReference>
<dbReference type="PDB" id="4WU1">
    <property type="method" value="X-ray"/>
    <property type="resolution" value="3.20 A"/>
    <property type="chains" value="22/2E=1-239"/>
</dbReference>
<dbReference type="PDB" id="4WZD">
    <property type="method" value="X-ray"/>
    <property type="resolution" value="3.10 A"/>
    <property type="chains" value="22/2E=1-239"/>
</dbReference>
<dbReference type="PDB" id="4WZO">
    <property type="method" value="X-ray"/>
    <property type="resolution" value="3.30 A"/>
    <property type="chains" value="22/2E=1-239"/>
</dbReference>
<dbReference type="PDB" id="4X62">
    <property type="method" value="X-ray"/>
    <property type="resolution" value="3.45 A"/>
    <property type="chains" value="C=2-208"/>
</dbReference>
<dbReference type="PDB" id="4X64">
    <property type="method" value="X-ray"/>
    <property type="resolution" value="3.35 A"/>
    <property type="chains" value="C=2-208"/>
</dbReference>
<dbReference type="PDB" id="4X65">
    <property type="method" value="X-ray"/>
    <property type="resolution" value="3.35 A"/>
    <property type="chains" value="C=2-208"/>
</dbReference>
<dbReference type="PDB" id="4X66">
    <property type="method" value="X-ray"/>
    <property type="resolution" value="3.45 A"/>
    <property type="chains" value="C=2-208"/>
</dbReference>
<dbReference type="PDB" id="4Y4O">
    <property type="method" value="X-ray"/>
    <property type="resolution" value="2.30 A"/>
    <property type="chains" value="1c/2c=1-239"/>
</dbReference>
<dbReference type="PDB" id="4Y4P">
    <property type="method" value="X-ray"/>
    <property type="resolution" value="2.50 A"/>
    <property type="chains" value="1c/2c=1-239"/>
</dbReference>
<dbReference type="PDB" id="4YHH">
    <property type="method" value="X-ray"/>
    <property type="resolution" value="3.42 A"/>
    <property type="chains" value="C=2-207"/>
</dbReference>
<dbReference type="PDB" id="4YPB">
    <property type="method" value="X-ray"/>
    <property type="resolution" value="3.40 A"/>
    <property type="chains" value="QC/XC=1-239"/>
</dbReference>
<dbReference type="PDB" id="4YY3">
    <property type="method" value="X-ray"/>
    <property type="resolution" value="3.60 A"/>
    <property type="chains" value="C=1-239"/>
</dbReference>
<dbReference type="PDB" id="4YZV">
    <property type="method" value="X-ray"/>
    <property type="resolution" value="3.10 A"/>
    <property type="chains" value="QC/XC=1-239"/>
</dbReference>
<dbReference type="PDB" id="4Z3S">
    <property type="method" value="X-ray"/>
    <property type="resolution" value="2.65 A"/>
    <property type="chains" value="1c/2c=1-239"/>
</dbReference>
<dbReference type="PDB" id="4Z8C">
    <property type="method" value="X-ray"/>
    <property type="resolution" value="2.90 A"/>
    <property type="chains" value="1c/2c=1-239"/>
</dbReference>
<dbReference type="PDB" id="4ZER">
    <property type="method" value="X-ray"/>
    <property type="resolution" value="3.10 A"/>
    <property type="chains" value="1c/2c=2-207"/>
</dbReference>
<dbReference type="PDB" id="4ZSN">
    <property type="method" value="X-ray"/>
    <property type="resolution" value="3.60 A"/>
    <property type="chains" value="QC/XC=1-239"/>
</dbReference>
<dbReference type="PDB" id="5A9Z">
    <property type="method" value="EM"/>
    <property type="resolution" value="4.70 A"/>
    <property type="chains" value="BG=2-207"/>
</dbReference>
<dbReference type="PDB" id="5AA0">
    <property type="method" value="EM"/>
    <property type="resolution" value="5.00 A"/>
    <property type="chains" value="BG=2-207"/>
</dbReference>
<dbReference type="PDB" id="5BR8">
    <property type="method" value="X-ray"/>
    <property type="resolution" value="3.40 A"/>
    <property type="chains" value="C=1-239"/>
</dbReference>
<dbReference type="PDB" id="5CZP">
    <property type="method" value="X-ray"/>
    <property type="resolution" value="3.30 A"/>
    <property type="chains" value="QC/XC=1-239"/>
</dbReference>
<dbReference type="PDB" id="5D8B">
    <property type="method" value="X-ray"/>
    <property type="resolution" value="3.63 A"/>
    <property type="chains" value="DA/ZB=1-239"/>
</dbReference>
<dbReference type="PDB" id="5DFE">
    <property type="method" value="X-ray"/>
    <property type="resolution" value="3.10 A"/>
    <property type="chains" value="QC/XC=1-239"/>
</dbReference>
<dbReference type="PDB" id="5DOX">
    <property type="method" value="X-ray"/>
    <property type="resolution" value="3.10 A"/>
    <property type="chains" value="1c/2c=1-239"/>
</dbReference>
<dbReference type="PDB" id="5DOY">
    <property type="method" value="X-ray"/>
    <property type="resolution" value="2.60 A"/>
    <property type="chains" value="1c/2c=1-239"/>
</dbReference>
<dbReference type="PDB" id="5E7K">
    <property type="method" value="X-ray"/>
    <property type="resolution" value="3.20 A"/>
    <property type="chains" value="22/2E=1-239"/>
</dbReference>
<dbReference type="PDB" id="5E81">
    <property type="method" value="X-ray"/>
    <property type="resolution" value="2.95 A"/>
    <property type="chains" value="22/2E=1-239"/>
</dbReference>
<dbReference type="PDB" id="5EL4">
    <property type="method" value="X-ray"/>
    <property type="resolution" value="3.15 A"/>
    <property type="chains" value="22/2E=1-239"/>
</dbReference>
<dbReference type="PDB" id="5EL5">
    <property type="method" value="X-ray"/>
    <property type="resolution" value="3.15 A"/>
    <property type="chains" value="22/2E=1-239"/>
</dbReference>
<dbReference type="PDB" id="5EL6">
    <property type="method" value="X-ray"/>
    <property type="resolution" value="3.10 A"/>
    <property type="chains" value="22/2E=1-239"/>
</dbReference>
<dbReference type="PDB" id="5EL7">
    <property type="method" value="X-ray"/>
    <property type="resolution" value="3.15 A"/>
    <property type="chains" value="22/2E=1-239"/>
</dbReference>
<dbReference type="PDB" id="5F8K">
    <property type="method" value="X-ray"/>
    <property type="resolution" value="2.80 A"/>
    <property type="chains" value="1c/2c=2-207"/>
</dbReference>
<dbReference type="PDB" id="5FDU">
    <property type="method" value="X-ray"/>
    <property type="resolution" value="2.90 A"/>
    <property type="chains" value="1c/2c=2-207"/>
</dbReference>
<dbReference type="PDB" id="5FDV">
    <property type="method" value="X-ray"/>
    <property type="resolution" value="2.80 A"/>
    <property type="chains" value="1c/2c=2-207"/>
</dbReference>
<dbReference type="PDB" id="5HAU">
    <property type="method" value="X-ray"/>
    <property type="resolution" value="3.00 A"/>
    <property type="chains" value="1c/2c=1-239"/>
</dbReference>
<dbReference type="PDB" id="5HCP">
    <property type="method" value="X-ray"/>
    <property type="resolution" value="2.89 A"/>
    <property type="chains" value="1c/2c=1-239"/>
</dbReference>
<dbReference type="PDB" id="5HCQ">
    <property type="method" value="X-ray"/>
    <property type="resolution" value="2.80 A"/>
    <property type="chains" value="1c/2c=1-239"/>
</dbReference>
<dbReference type="PDB" id="5HCR">
    <property type="method" value="X-ray"/>
    <property type="resolution" value="2.80 A"/>
    <property type="chains" value="1c/2c=1-239"/>
</dbReference>
<dbReference type="PDB" id="5HD1">
    <property type="method" value="X-ray"/>
    <property type="resolution" value="2.70 A"/>
    <property type="chains" value="1c/2c=1-239"/>
</dbReference>
<dbReference type="PDB" id="5IB7">
    <property type="method" value="X-ray"/>
    <property type="resolution" value="2.99 A"/>
    <property type="chains" value="22/2E=1-239"/>
</dbReference>
<dbReference type="PDB" id="5IB8">
    <property type="method" value="X-ray"/>
    <property type="resolution" value="3.13 A"/>
    <property type="chains" value="22/2E=1-239"/>
</dbReference>
<dbReference type="PDB" id="5IBB">
    <property type="method" value="X-ray"/>
    <property type="resolution" value="2.96 A"/>
    <property type="chains" value="22/2E=1-239"/>
</dbReference>
<dbReference type="PDB" id="5IMQ">
    <property type="method" value="EM"/>
    <property type="resolution" value="3.80 A"/>
    <property type="chains" value="G=1-239"/>
</dbReference>
<dbReference type="PDB" id="5IMR">
    <property type="method" value="EM"/>
    <property type="chains" value="G=1-239"/>
</dbReference>
<dbReference type="PDB" id="5IWA">
    <property type="method" value="X-ray"/>
    <property type="resolution" value="3.50 A"/>
    <property type="chains" value="C=2-207"/>
</dbReference>
<dbReference type="PDB" id="5J30">
    <property type="method" value="X-ray"/>
    <property type="resolution" value="3.20 A"/>
    <property type="chains" value="QC/XC=1-239"/>
</dbReference>
<dbReference type="PDB" id="5J3C">
    <property type="method" value="X-ray"/>
    <property type="resolution" value="3.04 A"/>
    <property type="chains" value="QC/XC=1-239"/>
</dbReference>
<dbReference type="PDB" id="5J4B">
    <property type="method" value="X-ray"/>
    <property type="resolution" value="2.60 A"/>
    <property type="chains" value="1c/2c=1-239"/>
</dbReference>
<dbReference type="PDB" id="5J4C">
    <property type="method" value="X-ray"/>
    <property type="resolution" value="2.80 A"/>
    <property type="chains" value="1c/2c=1-239"/>
</dbReference>
<dbReference type="PDB" id="5J8B">
    <property type="method" value="X-ray"/>
    <property type="resolution" value="2.60 A"/>
    <property type="chains" value="c=1-239"/>
</dbReference>
<dbReference type="PDB" id="5LMN">
    <property type="method" value="EM"/>
    <property type="resolution" value="3.55 A"/>
    <property type="chains" value="C=1-239"/>
</dbReference>
<dbReference type="PDB" id="5LMO">
    <property type="method" value="EM"/>
    <property type="resolution" value="4.30 A"/>
    <property type="chains" value="C=1-239"/>
</dbReference>
<dbReference type="PDB" id="5LMP">
    <property type="method" value="EM"/>
    <property type="resolution" value="5.35 A"/>
    <property type="chains" value="C=1-239"/>
</dbReference>
<dbReference type="PDB" id="5LMQ">
    <property type="method" value="EM"/>
    <property type="resolution" value="4.20 A"/>
    <property type="chains" value="C=1-239"/>
</dbReference>
<dbReference type="PDB" id="5LMR">
    <property type="method" value="EM"/>
    <property type="resolution" value="4.45 A"/>
    <property type="chains" value="C=1-239"/>
</dbReference>
<dbReference type="PDB" id="5LMS">
    <property type="method" value="EM"/>
    <property type="resolution" value="5.10 A"/>
    <property type="chains" value="C=1-239"/>
</dbReference>
<dbReference type="PDB" id="5LMT">
    <property type="method" value="EM"/>
    <property type="resolution" value="4.15 A"/>
    <property type="chains" value="C=1-239"/>
</dbReference>
<dbReference type="PDB" id="5LMU">
    <property type="method" value="EM"/>
    <property type="resolution" value="4.00 A"/>
    <property type="chains" value="C=1-239"/>
</dbReference>
<dbReference type="PDB" id="5LMV">
    <property type="method" value="EM"/>
    <property type="resolution" value="4.90 A"/>
    <property type="chains" value="C=1-239"/>
</dbReference>
<dbReference type="PDB" id="5NDJ">
    <property type="method" value="X-ray"/>
    <property type="resolution" value="3.15 A"/>
    <property type="chains" value="22/2E=1-239"/>
</dbReference>
<dbReference type="PDB" id="5NDK">
    <property type="method" value="X-ray"/>
    <property type="resolution" value="2.95 A"/>
    <property type="chains" value="22/2E=1-239"/>
</dbReference>
<dbReference type="PDB" id="5OT7">
    <property type="method" value="EM"/>
    <property type="resolution" value="3.80 A"/>
    <property type="chains" value="B=2-208"/>
</dbReference>
<dbReference type="PDB" id="5UQ7">
    <property type="method" value="EM"/>
    <property type="resolution" value="3.50 A"/>
    <property type="chains" value="c=2-207"/>
</dbReference>
<dbReference type="PDB" id="5UQ8">
    <property type="method" value="EM"/>
    <property type="resolution" value="3.20 A"/>
    <property type="chains" value="c=2-207"/>
</dbReference>
<dbReference type="PDB" id="5VP2">
    <property type="method" value="X-ray"/>
    <property type="resolution" value="2.80 A"/>
    <property type="chains" value="1c/2c=1-239"/>
</dbReference>
<dbReference type="PDB" id="5VPO">
    <property type="method" value="X-ray"/>
    <property type="resolution" value="3.34 A"/>
    <property type="chains" value="QC/XC=1-239"/>
</dbReference>
<dbReference type="PDB" id="5VPP">
    <property type="method" value="X-ray"/>
    <property type="resolution" value="3.90 A"/>
    <property type="chains" value="QC/XC=1-239"/>
</dbReference>
<dbReference type="PDB" id="5W4K">
    <property type="method" value="X-ray"/>
    <property type="resolution" value="2.70 A"/>
    <property type="chains" value="1c/2c=1-239"/>
</dbReference>
<dbReference type="PDB" id="5WIS">
    <property type="method" value="X-ray"/>
    <property type="resolution" value="2.70 A"/>
    <property type="chains" value="1c/2c=1-239"/>
</dbReference>
<dbReference type="PDB" id="5WIT">
    <property type="method" value="X-ray"/>
    <property type="resolution" value="2.60 A"/>
    <property type="chains" value="1c/2c=1-239"/>
</dbReference>
<dbReference type="PDB" id="5WNP">
    <property type="method" value="X-ray"/>
    <property type="resolution" value="3.30 A"/>
    <property type="chains" value="C=2-208"/>
</dbReference>
<dbReference type="PDB" id="5WNQ">
    <property type="method" value="X-ray"/>
    <property type="resolution" value="3.50 A"/>
    <property type="chains" value="C=2-207"/>
</dbReference>
<dbReference type="PDB" id="5WNR">
    <property type="method" value="X-ray"/>
    <property type="resolution" value="3.50 A"/>
    <property type="chains" value="C=2-207"/>
</dbReference>
<dbReference type="PDB" id="5WNS">
    <property type="method" value="X-ray"/>
    <property type="resolution" value="3.50 A"/>
    <property type="chains" value="C=2-207"/>
</dbReference>
<dbReference type="PDB" id="5WNT">
    <property type="method" value="X-ray"/>
    <property type="resolution" value="3.30 A"/>
    <property type="chains" value="C=2-208"/>
</dbReference>
<dbReference type="PDB" id="5WNU">
    <property type="method" value="X-ray"/>
    <property type="resolution" value="3.40 A"/>
    <property type="chains" value="C=2-208"/>
</dbReference>
<dbReference type="PDB" id="5WNV">
    <property type="method" value="X-ray"/>
    <property type="resolution" value="3.30 A"/>
    <property type="chains" value="C=2-208"/>
</dbReference>
<dbReference type="PDB" id="5ZLU">
    <property type="method" value="EM"/>
    <property type="resolution" value="3.60 A"/>
    <property type="chains" value="I=1-239"/>
</dbReference>
<dbReference type="PDB" id="6BUW">
    <property type="method" value="X-ray"/>
    <property type="resolution" value="3.50 A"/>
    <property type="chains" value="QC/XC=1-239"/>
</dbReference>
<dbReference type="PDB" id="6BZ6">
    <property type="method" value="X-ray"/>
    <property type="resolution" value="3.18 A"/>
    <property type="chains" value="QC/XC=1-239"/>
</dbReference>
<dbReference type="PDB" id="6BZ7">
    <property type="method" value="X-ray"/>
    <property type="resolution" value="3.68 A"/>
    <property type="chains" value="QC/XC=1-239"/>
</dbReference>
<dbReference type="PDB" id="6BZ8">
    <property type="method" value="X-ray"/>
    <property type="resolution" value="3.74 A"/>
    <property type="chains" value="QC/XC=1-239"/>
</dbReference>
<dbReference type="PDB" id="6C5L">
    <property type="method" value="X-ray"/>
    <property type="resolution" value="3.20 A"/>
    <property type="chains" value="AC/CC=1-239"/>
</dbReference>
<dbReference type="PDB" id="6CAE">
    <property type="method" value="X-ray"/>
    <property type="resolution" value="2.60 A"/>
    <property type="chains" value="1c/2c=1-239"/>
</dbReference>
<dbReference type="PDB" id="6CAO">
    <property type="method" value="X-ray"/>
    <property type="resolution" value="3.45 A"/>
    <property type="chains" value="C=2-208"/>
</dbReference>
<dbReference type="PDB" id="6CAP">
    <property type="method" value="X-ray"/>
    <property type="resolution" value="3.40 A"/>
    <property type="chains" value="C=2-207"/>
</dbReference>
<dbReference type="PDB" id="6CAQ">
    <property type="method" value="X-ray"/>
    <property type="resolution" value="3.40 A"/>
    <property type="chains" value="C=2-207"/>
</dbReference>
<dbReference type="PDB" id="6CAR">
    <property type="method" value="X-ray"/>
    <property type="resolution" value="3.40 A"/>
    <property type="chains" value="C=2-239"/>
</dbReference>
<dbReference type="PDB" id="6CAS">
    <property type="method" value="X-ray"/>
    <property type="resolution" value="3.50 A"/>
    <property type="chains" value="C=2-239"/>
</dbReference>
<dbReference type="PDB" id="6CFJ">
    <property type="method" value="X-ray"/>
    <property type="resolution" value="2.80 A"/>
    <property type="chains" value="1c/2c=1-239"/>
</dbReference>
<dbReference type="PDB" id="6CFK">
    <property type="method" value="X-ray"/>
    <property type="resolution" value="2.70 A"/>
    <property type="chains" value="1c/2c=1-239"/>
</dbReference>
<dbReference type="PDB" id="6CFL">
    <property type="method" value="X-ray"/>
    <property type="resolution" value="2.60 A"/>
    <property type="chains" value="1c/2c=1-239"/>
</dbReference>
<dbReference type="PDB" id="6CZR">
    <property type="method" value="X-ray"/>
    <property type="resolution" value="3.14 A"/>
    <property type="chains" value="1c/2c=2-207"/>
</dbReference>
<dbReference type="PDB" id="6DTI">
    <property type="method" value="X-ray"/>
    <property type="resolution" value="3.54 A"/>
    <property type="chains" value="C=1-239"/>
</dbReference>
<dbReference type="PDB" id="6FKR">
    <property type="method" value="X-ray"/>
    <property type="resolution" value="3.20 A"/>
    <property type="chains" value="1c/2c=2-207"/>
</dbReference>
<dbReference type="PDB" id="6GSJ">
    <property type="method" value="X-ray"/>
    <property type="resolution" value="2.96 A"/>
    <property type="chains" value="22/2E=1-239"/>
</dbReference>
<dbReference type="PDB" id="6GSK">
    <property type="method" value="X-ray"/>
    <property type="resolution" value="3.36 A"/>
    <property type="chains" value="22/2E=1-239"/>
</dbReference>
<dbReference type="PDB" id="6GSL">
    <property type="method" value="X-ray"/>
    <property type="resolution" value="3.16 A"/>
    <property type="chains" value="22/2E=1-239"/>
</dbReference>
<dbReference type="PDB" id="6GZQ">
    <property type="method" value="EM"/>
    <property type="resolution" value="3.28 A"/>
    <property type="chains" value="C2=2-207"/>
</dbReference>
<dbReference type="PDB" id="6GZX">
    <property type="method" value="EM"/>
    <property type="resolution" value="4.57 A"/>
    <property type="chains" value="C3/C4=2-207"/>
</dbReference>
<dbReference type="PDB" id="6GZZ">
    <property type="method" value="EM"/>
    <property type="resolution" value="4.13 A"/>
    <property type="chains" value="C3/C4=2-207"/>
</dbReference>
<dbReference type="PDB" id="6MKN">
    <property type="method" value="X-ray"/>
    <property type="resolution" value="3.46 A"/>
    <property type="chains" value="C=1-239"/>
</dbReference>
<dbReference type="PDB" id="6MPF">
    <property type="method" value="X-ray"/>
    <property type="resolution" value="3.33 A"/>
    <property type="chains" value="C=2-207"/>
</dbReference>
<dbReference type="PDB" id="6MPI">
    <property type="method" value="X-ray"/>
    <property type="resolution" value="3.33 A"/>
    <property type="chains" value="C=1-239"/>
</dbReference>
<dbReference type="PDB" id="6N9E">
    <property type="method" value="X-ray"/>
    <property type="resolution" value="3.70 A"/>
    <property type="chains" value="1c/2c=1-239"/>
</dbReference>
<dbReference type="PDB" id="6N9F">
    <property type="method" value="X-ray"/>
    <property type="resolution" value="3.70 A"/>
    <property type="chains" value="1c/2c=1-239"/>
</dbReference>
<dbReference type="PDB" id="6ND5">
    <property type="method" value="X-ray"/>
    <property type="resolution" value="2.60 A"/>
    <property type="chains" value="1c/2c=1-239"/>
</dbReference>
<dbReference type="PDB" id="6ND6">
    <property type="method" value="X-ray"/>
    <property type="resolution" value="2.85 A"/>
    <property type="chains" value="1c/2c=1-239"/>
</dbReference>
<dbReference type="PDB" id="6NDK">
    <property type="method" value="X-ray"/>
    <property type="resolution" value="3.64 A"/>
    <property type="chains" value="QC/XC=1-239"/>
</dbReference>
<dbReference type="PDB" id="6NSH">
    <property type="method" value="X-ray"/>
    <property type="resolution" value="3.40 A"/>
    <property type="chains" value="QC/XC=1-239"/>
</dbReference>
<dbReference type="PDB" id="6NTA">
    <property type="method" value="X-ray"/>
    <property type="resolution" value="3.10 A"/>
    <property type="chains" value="QC/XC=1-239"/>
</dbReference>
<dbReference type="PDB" id="6NUO">
    <property type="method" value="X-ray"/>
    <property type="resolution" value="3.20 A"/>
    <property type="chains" value="QC/XC=1-239"/>
</dbReference>
<dbReference type="PDB" id="6NWY">
    <property type="method" value="X-ray"/>
    <property type="resolution" value="3.50 A"/>
    <property type="chains" value="QC/XC=1-239"/>
</dbReference>
<dbReference type="PDB" id="6NY6">
    <property type="method" value="X-ray"/>
    <property type="resolution" value="3.74 A"/>
    <property type="chains" value="C=1-239"/>
</dbReference>
<dbReference type="PDB" id="6O3M">
    <property type="method" value="X-ray"/>
    <property type="resolution" value="3.97 A"/>
    <property type="chains" value="QC/XC=1-239"/>
</dbReference>
<dbReference type="PDB" id="6O97">
    <property type="method" value="X-ray"/>
    <property type="resolution" value="2.75 A"/>
    <property type="chains" value="1c/2c=1-239"/>
</dbReference>
<dbReference type="PDB" id="6OF1">
    <property type="method" value="X-ray"/>
    <property type="resolution" value="2.80 A"/>
    <property type="chains" value="1c/2c=1-239"/>
</dbReference>
<dbReference type="PDB" id="6OF6">
    <property type="method" value="X-ray"/>
    <property type="resolution" value="3.20 A"/>
    <property type="chains" value="QC/XC=1-239"/>
</dbReference>
<dbReference type="PDB" id="6OJ2">
    <property type="method" value="X-ray"/>
    <property type="resolution" value="3.20 A"/>
    <property type="chains" value="QC/XC=1-239"/>
</dbReference>
<dbReference type="PDB" id="6OPE">
    <property type="method" value="X-ray"/>
    <property type="resolution" value="3.10 A"/>
    <property type="chains" value="QC/XC=1-239"/>
</dbReference>
<dbReference type="PDB" id="6ORD">
    <property type="method" value="X-ray"/>
    <property type="resolution" value="3.10 A"/>
    <property type="chains" value="QC/XC=1-239"/>
</dbReference>
<dbReference type="PDB" id="6OSI">
    <property type="method" value="X-ray"/>
    <property type="resolution" value="4.14 A"/>
    <property type="chains" value="QC/XC=1-239"/>
</dbReference>
<dbReference type="PDB" id="6OTR">
    <property type="method" value="X-ray"/>
    <property type="resolution" value="3.12 A"/>
    <property type="chains" value="QC/XC=1-239"/>
</dbReference>
<dbReference type="PDB" id="6OXA">
    <property type="method" value="X-ray"/>
    <property type="resolution" value="3.25 A"/>
    <property type="chains" value="QC/XC=1-239"/>
</dbReference>
<dbReference type="PDB" id="6OXI">
    <property type="method" value="X-ray"/>
    <property type="resolution" value="3.50 A"/>
    <property type="chains" value="QC/XC=1-239"/>
</dbReference>
<dbReference type="PDB" id="6Q95">
    <property type="method" value="EM"/>
    <property type="resolution" value="3.70 A"/>
    <property type="chains" value="h=2-208"/>
</dbReference>
<dbReference type="PDB" id="6QNQ">
    <property type="method" value="X-ray"/>
    <property type="resolution" value="3.50 A"/>
    <property type="chains" value="22/2E=1-239"/>
</dbReference>
<dbReference type="PDB" id="6QNR">
    <property type="method" value="X-ray"/>
    <property type="resolution" value="3.10 A"/>
    <property type="chains" value="22/2E=1-239"/>
</dbReference>
<dbReference type="PDB" id="6UCQ">
    <property type="method" value="X-ray"/>
    <property type="resolution" value="3.50 A"/>
    <property type="chains" value="1c/2c=1-239"/>
</dbReference>
<dbReference type="PDB" id="6UO1">
    <property type="method" value="X-ray"/>
    <property type="resolution" value="2.95 A"/>
    <property type="chains" value="1c/2c=1-239"/>
</dbReference>
<dbReference type="PDB" id="6XHV">
    <property type="method" value="X-ray"/>
    <property type="resolution" value="2.40 A"/>
    <property type="chains" value="1c/2c=1-239"/>
</dbReference>
<dbReference type="PDB" id="6XHW">
    <property type="method" value="X-ray"/>
    <property type="resolution" value="2.50 A"/>
    <property type="chains" value="1c/2c=1-239"/>
</dbReference>
<dbReference type="PDB" id="6XHX">
    <property type="method" value="X-ray"/>
    <property type="resolution" value="2.55 A"/>
    <property type="chains" value="1c/2c=1-239"/>
</dbReference>
<dbReference type="PDB" id="6XHY">
    <property type="method" value="X-ray"/>
    <property type="resolution" value="2.60 A"/>
    <property type="chains" value="1c/2c=1-239"/>
</dbReference>
<dbReference type="PDB" id="6XQD">
    <property type="method" value="X-ray"/>
    <property type="resolution" value="2.80 A"/>
    <property type="chains" value="1c/2c=1-239"/>
</dbReference>
<dbReference type="PDB" id="6XQE">
    <property type="method" value="X-ray"/>
    <property type="resolution" value="3.00 A"/>
    <property type="chains" value="1c/2c=1-239"/>
</dbReference>
<dbReference type="PDB" id="7AZO">
    <property type="method" value="X-ray"/>
    <property type="resolution" value="3.30 A"/>
    <property type="chains" value="S3A/S3B=1-239"/>
</dbReference>
<dbReference type="PDB" id="7AZS">
    <property type="method" value="X-ray"/>
    <property type="resolution" value="3.10 A"/>
    <property type="chains" value="S3A/S3B=1-239"/>
</dbReference>
<dbReference type="PDB" id="7DUG">
    <property type="method" value="X-ray"/>
    <property type="resolution" value="3.75 A"/>
    <property type="chains" value="C=1-239"/>
</dbReference>
<dbReference type="PDB" id="7DUH">
    <property type="method" value="X-ray"/>
    <property type="resolution" value="3.75 A"/>
    <property type="chains" value="C=1-239"/>
</dbReference>
<dbReference type="PDB" id="7DUI">
    <property type="method" value="X-ray"/>
    <property type="resolution" value="3.62 A"/>
    <property type="chains" value="C=1-239"/>
</dbReference>
<dbReference type="PDB" id="7DUJ">
    <property type="method" value="X-ray"/>
    <property type="resolution" value="3.75 A"/>
    <property type="chains" value="C=1-239"/>
</dbReference>
<dbReference type="PDB" id="7DUK">
    <property type="method" value="X-ray"/>
    <property type="resolution" value="3.60 A"/>
    <property type="chains" value="C=1-239"/>
</dbReference>
<dbReference type="PDB" id="7DUL">
    <property type="method" value="X-ray"/>
    <property type="resolution" value="3.62 A"/>
    <property type="chains" value="C=1-239"/>
</dbReference>
<dbReference type="PDB" id="7JQL">
    <property type="method" value="X-ray"/>
    <property type="resolution" value="3.00 A"/>
    <property type="chains" value="1c/2c=1-239"/>
</dbReference>
<dbReference type="PDB" id="7JQM">
    <property type="method" value="X-ray"/>
    <property type="resolution" value="3.05 A"/>
    <property type="chains" value="1c/2c=1-239"/>
</dbReference>
<dbReference type="PDB" id="7LH5">
    <property type="method" value="X-ray"/>
    <property type="resolution" value="3.27 A"/>
    <property type="chains" value="AC/CC=1-239"/>
</dbReference>
<dbReference type="PDB" id="7MD7">
    <property type="method" value="X-ray"/>
    <property type="resolution" value="2.80 A"/>
    <property type="chains" value="1c/2c=1-239"/>
</dbReference>
<dbReference type="PDB" id="7RQ8">
    <property type="method" value="X-ray"/>
    <property type="resolution" value="2.50 A"/>
    <property type="chains" value="1c/2c=1-239"/>
</dbReference>
<dbReference type="PDB" id="7RQ9">
    <property type="method" value="X-ray"/>
    <property type="resolution" value="2.60 A"/>
    <property type="chains" value="1c/2c=1-239"/>
</dbReference>
<dbReference type="PDB" id="7RQA">
    <property type="method" value="X-ray"/>
    <property type="resolution" value="2.40 A"/>
    <property type="chains" value="1c/2c=1-239"/>
</dbReference>
<dbReference type="PDB" id="7RQB">
    <property type="method" value="X-ray"/>
    <property type="resolution" value="2.45 A"/>
    <property type="chains" value="1c/2c=1-239"/>
</dbReference>
<dbReference type="PDB" id="7RQC">
    <property type="method" value="X-ray"/>
    <property type="resolution" value="2.50 A"/>
    <property type="chains" value="1c/2c=1-239"/>
</dbReference>
<dbReference type="PDB" id="7RQD">
    <property type="method" value="X-ray"/>
    <property type="resolution" value="2.50 A"/>
    <property type="chains" value="1c/2c=1-239"/>
</dbReference>
<dbReference type="PDB" id="7RQE">
    <property type="method" value="X-ray"/>
    <property type="resolution" value="2.40 A"/>
    <property type="chains" value="1c/2c=1-239"/>
</dbReference>
<dbReference type="PDB" id="7U2H">
    <property type="method" value="X-ray"/>
    <property type="resolution" value="2.55 A"/>
    <property type="chains" value="1c/2c=1-239"/>
</dbReference>
<dbReference type="PDB" id="7U2I">
    <property type="method" value="X-ray"/>
    <property type="resolution" value="2.55 A"/>
    <property type="chains" value="1c/2c=1-239"/>
</dbReference>
<dbReference type="PDB" id="7U2J">
    <property type="method" value="X-ray"/>
    <property type="resolution" value="2.55 A"/>
    <property type="chains" value="1c/2c=1-239"/>
</dbReference>
<dbReference type="PDB" id="7V2L">
    <property type="method" value="EM"/>
    <property type="resolution" value="3.30 A"/>
    <property type="chains" value="C=1-239"/>
</dbReference>
<dbReference type="PDB" id="7V2M">
    <property type="method" value="EM"/>
    <property type="resolution" value="3.40 A"/>
    <property type="chains" value="C=1-239"/>
</dbReference>
<dbReference type="PDB" id="7V2N">
    <property type="method" value="EM"/>
    <property type="resolution" value="3.60 A"/>
    <property type="chains" value="C=1-239"/>
</dbReference>
<dbReference type="PDB" id="7V2O">
    <property type="method" value="EM"/>
    <property type="resolution" value="3.50 A"/>
    <property type="chains" value="C=1-239"/>
</dbReference>
<dbReference type="PDB" id="7V2P">
    <property type="method" value="EM"/>
    <property type="resolution" value="3.30 A"/>
    <property type="chains" value="C=1-239"/>
</dbReference>
<dbReference type="PDB" id="7V2Q">
    <property type="method" value="EM"/>
    <property type="resolution" value="3.24 A"/>
    <property type="chains" value="C=1-239"/>
</dbReference>
<dbReference type="PDB" id="8CVJ">
    <property type="method" value="X-ray"/>
    <property type="resolution" value="2.40 A"/>
    <property type="chains" value="1c/2c=1-239"/>
</dbReference>
<dbReference type="PDB" id="8CVK">
    <property type="method" value="X-ray"/>
    <property type="resolution" value="2.50 A"/>
    <property type="chains" value="1c/2c=1-239"/>
</dbReference>
<dbReference type="PDB" id="8CVL">
    <property type="method" value="X-ray"/>
    <property type="resolution" value="2.30 A"/>
    <property type="chains" value="1c/2c=1-239"/>
</dbReference>
<dbReference type="PDB" id="8EKB">
    <property type="method" value="X-ray"/>
    <property type="resolution" value="2.70 A"/>
    <property type="chains" value="1c/2c=1-239"/>
</dbReference>
<dbReference type="PDB" id="8EV6">
    <property type="method" value="X-ray"/>
    <property type="resolution" value="2.95 A"/>
    <property type="chains" value="1c/2c=1-239"/>
</dbReference>
<dbReference type="PDB" id="8EV7">
    <property type="method" value="X-ray"/>
    <property type="resolution" value="2.89 A"/>
    <property type="chains" value="1c/2c=1-239"/>
</dbReference>
<dbReference type="PDB" id="8FC1">
    <property type="method" value="X-ray"/>
    <property type="resolution" value="2.50 A"/>
    <property type="chains" value="1c/2c=1-239"/>
</dbReference>
<dbReference type="PDB" id="8FC2">
    <property type="method" value="X-ray"/>
    <property type="resolution" value="2.50 A"/>
    <property type="chains" value="1c/2c=1-239"/>
</dbReference>
<dbReference type="PDB" id="8FC3">
    <property type="method" value="X-ray"/>
    <property type="resolution" value="2.60 A"/>
    <property type="chains" value="1c/2c=1-239"/>
</dbReference>
<dbReference type="PDB" id="8FC4">
    <property type="method" value="X-ray"/>
    <property type="resolution" value="2.45 A"/>
    <property type="chains" value="1c/2c=1-239"/>
</dbReference>
<dbReference type="PDB" id="8FC5">
    <property type="method" value="X-ray"/>
    <property type="resolution" value="2.65 A"/>
    <property type="chains" value="1c/2c=1-239"/>
</dbReference>
<dbReference type="PDB" id="8FC6">
    <property type="method" value="X-ray"/>
    <property type="resolution" value="2.35 A"/>
    <property type="chains" value="1c/2c=1-239"/>
</dbReference>
<dbReference type="PDB" id="8FOM">
    <property type="method" value="X-ray"/>
    <property type="resolution" value="3.58 A"/>
    <property type="chains" value="QC/XC=1-239"/>
</dbReference>
<dbReference type="PDB" id="8FON">
    <property type="method" value="X-ray"/>
    <property type="resolution" value="3.64 A"/>
    <property type="chains" value="QC/XC=1-239"/>
</dbReference>
<dbReference type="PDB" id="8G29">
    <property type="method" value="X-ray"/>
    <property type="resolution" value="2.55 A"/>
    <property type="chains" value="1c/2c=1-239"/>
</dbReference>
<dbReference type="PDB" id="8G2A">
    <property type="method" value="X-ray"/>
    <property type="resolution" value="2.45 A"/>
    <property type="chains" value="1c/2c=1-239"/>
</dbReference>
<dbReference type="PDB" id="8G2B">
    <property type="method" value="X-ray"/>
    <property type="resolution" value="2.55 A"/>
    <property type="chains" value="1c/2c=1-239"/>
</dbReference>
<dbReference type="PDB" id="8G2C">
    <property type="method" value="X-ray"/>
    <property type="resolution" value="2.65 A"/>
    <property type="chains" value="1c/2c=1-239"/>
</dbReference>
<dbReference type="PDB" id="8G2D">
    <property type="method" value="X-ray"/>
    <property type="resolution" value="2.70 A"/>
    <property type="chains" value="1c/2c=1-239"/>
</dbReference>
<dbReference type="PDB" id="8T8B">
    <property type="method" value="X-ray"/>
    <property type="resolution" value="2.65 A"/>
    <property type="chains" value="1c/2c=1-239"/>
</dbReference>
<dbReference type="PDB" id="8T8C">
    <property type="method" value="X-ray"/>
    <property type="resolution" value="2.60 A"/>
    <property type="chains" value="1c/2c=1-239"/>
</dbReference>
<dbReference type="PDB" id="8UD6">
    <property type="method" value="X-ray"/>
    <property type="resolution" value="2.70 A"/>
    <property type="chains" value="1c/2c=1-239"/>
</dbReference>
<dbReference type="PDB" id="8UD7">
    <property type="method" value="X-ray"/>
    <property type="resolution" value="2.55 A"/>
    <property type="chains" value="1c/2c=1-239"/>
</dbReference>
<dbReference type="PDB" id="8UD8">
    <property type="method" value="X-ray"/>
    <property type="resolution" value="2.60 A"/>
    <property type="chains" value="1c/2c=1-239"/>
</dbReference>
<dbReference type="PDB" id="8UVR">
    <property type="method" value="X-ray"/>
    <property type="resolution" value="2.60 A"/>
    <property type="chains" value="1c/2c=1-239"/>
</dbReference>
<dbReference type="PDB" id="8UVS">
    <property type="method" value="X-ray"/>
    <property type="resolution" value="2.75 A"/>
    <property type="chains" value="1c/2c=1-239"/>
</dbReference>
<dbReference type="PDB" id="8VTU">
    <property type="method" value="X-ray"/>
    <property type="resolution" value="2.40 A"/>
    <property type="chains" value="1c/2c=1-239"/>
</dbReference>
<dbReference type="PDB" id="8VTV">
    <property type="method" value="X-ray"/>
    <property type="resolution" value="2.55 A"/>
    <property type="chains" value="1c/2c=1-239"/>
</dbReference>
<dbReference type="PDB" id="8VTW">
    <property type="method" value="X-ray"/>
    <property type="resolution" value="2.35 A"/>
    <property type="chains" value="1c/2c=1-239"/>
</dbReference>
<dbReference type="PDB" id="8VTX">
    <property type="method" value="X-ray"/>
    <property type="resolution" value="2.40 A"/>
    <property type="chains" value="1c/2c=1-239"/>
</dbReference>
<dbReference type="PDB" id="8VTY">
    <property type="method" value="X-ray"/>
    <property type="resolution" value="2.60 A"/>
    <property type="chains" value="1c/2c=1-239"/>
</dbReference>
<dbReference type="PDB" id="9B00">
    <property type="method" value="X-ray"/>
    <property type="resolution" value="2.80 A"/>
    <property type="chains" value="1c/2c=1-239"/>
</dbReference>
<dbReference type="PDB" id="9D0J">
    <property type="method" value="X-ray"/>
    <property type="resolution" value="2.50 A"/>
    <property type="chains" value="1c/2c=1-239"/>
</dbReference>
<dbReference type="PDB" id="9D7R">
    <property type="method" value="X-ray"/>
    <property type="resolution" value="2.70 A"/>
    <property type="chains" value="1c/2c=1-239"/>
</dbReference>
<dbReference type="PDB" id="9D7S">
    <property type="method" value="X-ray"/>
    <property type="resolution" value="2.85 A"/>
    <property type="chains" value="1c/2c=1-239"/>
</dbReference>
<dbReference type="PDB" id="9D7T">
    <property type="method" value="X-ray"/>
    <property type="resolution" value="2.70 A"/>
    <property type="chains" value="1c/2c=1-239"/>
</dbReference>
<dbReference type="PDB" id="9DFC">
    <property type="method" value="X-ray"/>
    <property type="resolution" value="2.50 A"/>
    <property type="chains" value="1c/2c=1-239"/>
</dbReference>
<dbReference type="PDB" id="9DFD">
    <property type="method" value="X-ray"/>
    <property type="resolution" value="2.60 A"/>
    <property type="chains" value="1c/2c=1-239"/>
</dbReference>
<dbReference type="PDB" id="9DFE">
    <property type="method" value="X-ray"/>
    <property type="resolution" value="2.60 A"/>
    <property type="chains" value="1c/2c=1-239"/>
</dbReference>
<dbReference type="PDBsum" id="1FJG"/>
<dbReference type="PDBsum" id="1HNW"/>
<dbReference type="PDBsum" id="1HNX"/>
<dbReference type="PDBsum" id="1HNZ"/>
<dbReference type="PDBsum" id="1HR0"/>
<dbReference type="PDBsum" id="1I94"/>
<dbReference type="PDBsum" id="1I95"/>
<dbReference type="PDBsum" id="1I96"/>
<dbReference type="PDBsum" id="1I97"/>
<dbReference type="PDBsum" id="1IBK"/>
<dbReference type="PDBsum" id="1IBL"/>
<dbReference type="PDBsum" id="1IBM"/>
<dbReference type="PDBsum" id="1J5E"/>
<dbReference type="PDBsum" id="1JGO"/>
<dbReference type="PDBsum" id="1JGP"/>
<dbReference type="PDBsum" id="1JGQ"/>
<dbReference type="PDBsum" id="1ML5"/>
<dbReference type="PDBsum" id="1N32"/>
<dbReference type="PDBsum" id="1N33"/>
<dbReference type="PDBsum" id="1N34"/>
<dbReference type="PDBsum" id="1N36"/>
<dbReference type="PDBsum" id="1VVJ"/>
<dbReference type="PDBsum" id="1VY4"/>
<dbReference type="PDBsum" id="1VY5"/>
<dbReference type="PDBsum" id="1VY6"/>
<dbReference type="PDBsum" id="1VY7"/>
<dbReference type="PDBsum" id="1XMO"/>
<dbReference type="PDBsum" id="1XMQ"/>
<dbReference type="PDBsum" id="1XNQ"/>
<dbReference type="PDBsum" id="1XNR"/>
<dbReference type="PDBsum" id="2E5L"/>
<dbReference type="PDBsum" id="2F4V"/>
<dbReference type="PDBsum" id="2HHH"/>
<dbReference type="PDBsum" id="2UU9"/>
<dbReference type="PDBsum" id="2UUA"/>
<dbReference type="PDBsum" id="2UUB"/>
<dbReference type="PDBsum" id="2UUC"/>
<dbReference type="PDBsum" id="2UXB"/>
<dbReference type="PDBsum" id="2UXC"/>
<dbReference type="PDBsum" id="2UXD"/>
<dbReference type="PDBsum" id="2VQE"/>
<dbReference type="PDBsum" id="2VQF"/>
<dbReference type="PDBsum" id="2ZM6"/>
<dbReference type="PDBsum" id="3OTO"/>
<dbReference type="PDBsum" id="3T1H"/>
<dbReference type="PDBsum" id="3T1Y"/>
<dbReference type="PDBsum" id="4AQY"/>
<dbReference type="PDBsum" id="4B3M"/>
<dbReference type="PDBsum" id="4B3R"/>
<dbReference type="PDBsum" id="4B3S"/>
<dbReference type="PDBsum" id="4B3T"/>
<dbReference type="PDBsum" id="4DR1"/>
<dbReference type="PDBsum" id="4DR2"/>
<dbReference type="PDBsum" id="4DR3"/>
<dbReference type="PDBsum" id="4DR4"/>
<dbReference type="PDBsum" id="4DR5"/>
<dbReference type="PDBsum" id="4DR6"/>
<dbReference type="PDBsum" id="4DR7"/>
<dbReference type="PDBsum" id="4DUY"/>
<dbReference type="PDBsum" id="4DUZ"/>
<dbReference type="PDBsum" id="4DV0"/>
<dbReference type="PDBsum" id="4DV1"/>
<dbReference type="PDBsum" id="4DV2"/>
<dbReference type="PDBsum" id="4DV3"/>
<dbReference type="PDBsum" id="4DV4"/>
<dbReference type="PDBsum" id="4DV5"/>
<dbReference type="PDBsum" id="4DV6"/>
<dbReference type="PDBsum" id="4DV7"/>
<dbReference type="PDBsum" id="4GKJ"/>
<dbReference type="PDBsum" id="4GKK"/>
<dbReference type="PDBsum" id="4JI0"/>
<dbReference type="PDBsum" id="4JI1"/>
<dbReference type="PDBsum" id="4JI2"/>
<dbReference type="PDBsum" id="4JI3"/>
<dbReference type="PDBsum" id="4JI4"/>
<dbReference type="PDBsum" id="4JI5"/>
<dbReference type="PDBsum" id="4JI6"/>
<dbReference type="PDBsum" id="4JI7"/>
<dbReference type="PDBsum" id="4JI8"/>
<dbReference type="PDBsum" id="4JV5"/>
<dbReference type="PDBsum" id="4JYA"/>
<dbReference type="PDBsum" id="4K0K"/>
<dbReference type="PDBsum" id="4KHP"/>
<dbReference type="PDBsum" id="4L47"/>
<dbReference type="PDBsum" id="4L71"/>
<dbReference type="PDBsum" id="4LEL"/>
<dbReference type="PDBsum" id="4LF4"/>
<dbReference type="PDBsum" id="4LF5"/>
<dbReference type="PDBsum" id="4LF6"/>
<dbReference type="PDBsum" id="4LF7"/>
<dbReference type="PDBsum" id="4LF8"/>
<dbReference type="PDBsum" id="4LF9"/>
<dbReference type="PDBsum" id="4LFA"/>
<dbReference type="PDBsum" id="4LFB"/>
<dbReference type="PDBsum" id="4LFC"/>
<dbReference type="PDBsum" id="4LFZ"/>
<dbReference type="PDBsum" id="4LNT"/>
<dbReference type="PDBsum" id="4LSK"/>
<dbReference type="PDBsum" id="4LT8"/>
<dbReference type="PDBsum" id="4NXM"/>
<dbReference type="PDBsum" id="4NXN"/>
<dbReference type="PDBsum" id="4OX9"/>
<dbReference type="PDBsum" id="4P6F"/>
<dbReference type="PDBsum" id="4P70"/>
<dbReference type="PDBsum" id="4TUA"/>
<dbReference type="PDBsum" id="4TUB"/>
<dbReference type="PDBsum" id="4TUC"/>
<dbReference type="PDBsum" id="4TUD"/>
<dbReference type="PDBsum" id="4TUE"/>
<dbReference type="PDBsum" id="4V42"/>
<dbReference type="PDBsum" id="4V49"/>
<dbReference type="PDBsum" id="4V4A"/>
<dbReference type="PDBsum" id="4V4P"/>
<dbReference type="PDBsum" id="4V4R"/>
<dbReference type="PDBsum" id="4V4S"/>
<dbReference type="PDBsum" id="4V4T"/>
<dbReference type="PDBsum" id="4V4X"/>
<dbReference type="PDBsum" id="4V4Y"/>
<dbReference type="PDBsum" id="4V4Z"/>
<dbReference type="PDBsum" id="4V51"/>
<dbReference type="PDBsum" id="4V5A"/>
<dbReference type="PDBsum" id="4V5C"/>
<dbReference type="PDBsum" id="4V5D"/>
<dbReference type="PDBsum" id="4V5E"/>
<dbReference type="PDBsum" id="4V5F"/>
<dbReference type="PDBsum" id="4V5G"/>
<dbReference type="PDBsum" id="4V5J"/>
<dbReference type="PDBsum" id="4V5K"/>
<dbReference type="PDBsum" id="4V5L"/>
<dbReference type="PDBsum" id="4V5M"/>
<dbReference type="PDBsum" id="4V5N"/>
<dbReference type="PDBsum" id="4V5P"/>
<dbReference type="PDBsum" id="4V5Q"/>
<dbReference type="PDBsum" id="4V5R"/>
<dbReference type="PDBsum" id="4V5S"/>
<dbReference type="PDBsum" id="4V68"/>
<dbReference type="PDBsum" id="4V6A"/>
<dbReference type="PDBsum" id="4V6F"/>
<dbReference type="PDBsum" id="4V6G"/>
<dbReference type="PDBsum" id="4V7J"/>
<dbReference type="PDBsum" id="4V7K"/>
<dbReference type="PDBsum" id="4V7L"/>
<dbReference type="PDBsum" id="4V7M"/>
<dbReference type="PDBsum" id="4V7W"/>
<dbReference type="PDBsum" id="4V7X"/>
<dbReference type="PDBsum" id="4V7Y"/>
<dbReference type="PDBsum" id="4V7Z"/>
<dbReference type="PDBsum" id="4V87"/>
<dbReference type="PDBsum" id="4V8A"/>
<dbReference type="PDBsum" id="4V8B"/>
<dbReference type="PDBsum" id="4V8C"/>
<dbReference type="PDBsum" id="4V8D"/>
<dbReference type="PDBsum" id="4V8E"/>
<dbReference type="PDBsum" id="4V8F"/>
<dbReference type="PDBsum" id="4V8G"/>
<dbReference type="PDBsum" id="4V8H"/>
<dbReference type="PDBsum" id="4V8I"/>
<dbReference type="PDBsum" id="4V8J"/>
<dbReference type="PDBsum" id="4V8N"/>
<dbReference type="PDBsum" id="4V8O"/>
<dbReference type="PDBsum" id="4V8Q"/>
<dbReference type="PDBsum" id="4V8U"/>
<dbReference type="PDBsum" id="4V8X"/>
<dbReference type="PDBsum" id="4V90"/>
<dbReference type="PDBsum" id="4V95"/>
<dbReference type="PDBsum" id="4V97"/>
<dbReference type="PDBsum" id="4V9A"/>
<dbReference type="PDBsum" id="4V9B"/>
<dbReference type="PDBsum" id="4V9H"/>
<dbReference type="PDBsum" id="4V9I"/>
<dbReference type="PDBsum" id="4V9R"/>
<dbReference type="PDBsum" id="4V9S"/>
<dbReference type="PDBsum" id="4W2E"/>
<dbReference type="PDBsum" id="4W2F"/>
<dbReference type="PDBsum" id="4W2G"/>
<dbReference type="PDBsum" id="4W2H"/>
<dbReference type="PDBsum" id="4W2I"/>
<dbReference type="PDBsum" id="4W4G"/>
<dbReference type="PDBsum" id="4WPO"/>
<dbReference type="PDBsum" id="4WQ1"/>
<dbReference type="PDBsum" id="4WQF"/>
<dbReference type="PDBsum" id="4WQR"/>
<dbReference type="PDBsum" id="4WQU"/>
<dbReference type="PDBsum" id="4WQY"/>
<dbReference type="PDBsum" id="4WR6"/>
<dbReference type="PDBsum" id="4WRA"/>
<dbReference type="PDBsum" id="4WRO"/>
<dbReference type="PDBsum" id="4WSD"/>
<dbReference type="PDBsum" id="4WSM"/>
<dbReference type="PDBsum" id="4WT1"/>
<dbReference type="PDBsum" id="4WT8"/>
<dbReference type="PDBsum" id="4WU1"/>
<dbReference type="PDBsum" id="4WZD"/>
<dbReference type="PDBsum" id="4WZO"/>
<dbReference type="PDBsum" id="4X62"/>
<dbReference type="PDBsum" id="4X64"/>
<dbReference type="PDBsum" id="4X65"/>
<dbReference type="PDBsum" id="4X66"/>
<dbReference type="PDBsum" id="4Y4O"/>
<dbReference type="PDBsum" id="4Y4P"/>
<dbReference type="PDBsum" id="4YHH"/>
<dbReference type="PDBsum" id="4YPB"/>
<dbReference type="PDBsum" id="4YY3"/>
<dbReference type="PDBsum" id="4YZV"/>
<dbReference type="PDBsum" id="4Z3S"/>
<dbReference type="PDBsum" id="4Z8C"/>
<dbReference type="PDBsum" id="4ZER"/>
<dbReference type="PDBsum" id="4ZSN"/>
<dbReference type="PDBsum" id="5A9Z"/>
<dbReference type="PDBsum" id="5AA0"/>
<dbReference type="PDBsum" id="5BR8"/>
<dbReference type="PDBsum" id="5CZP"/>
<dbReference type="PDBsum" id="5D8B"/>
<dbReference type="PDBsum" id="5DFE"/>
<dbReference type="PDBsum" id="5DOX"/>
<dbReference type="PDBsum" id="5DOY"/>
<dbReference type="PDBsum" id="5E7K"/>
<dbReference type="PDBsum" id="5E81"/>
<dbReference type="PDBsum" id="5EL4"/>
<dbReference type="PDBsum" id="5EL5"/>
<dbReference type="PDBsum" id="5EL6"/>
<dbReference type="PDBsum" id="5EL7"/>
<dbReference type="PDBsum" id="5F8K"/>
<dbReference type="PDBsum" id="5FDU"/>
<dbReference type="PDBsum" id="5FDV"/>
<dbReference type="PDBsum" id="5HAU"/>
<dbReference type="PDBsum" id="5HCP"/>
<dbReference type="PDBsum" id="5HCQ"/>
<dbReference type="PDBsum" id="5HCR"/>
<dbReference type="PDBsum" id="5HD1"/>
<dbReference type="PDBsum" id="5IB7"/>
<dbReference type="PDBsum" id="5IB8"/>
<dbReference type="PDBsum" id="5IBB"/>
<dbReference type="PDBsum" id="5IMQ"/>
<dbReference type="PDBsum" id="5IMR"/>
<dbReference type="PDBsum" id="5IWA"/>
<dbReference type="PDBsum" id="5J30"/>
<dbReference type="PDBsum" id="5J3C"/>
<dbReference type="PDBsum" id="5J4B"/>
<dbReference type="PDBsum" id="5J4C"/>
<dbReference type="PDBsum" id="5J8B"/>
<dbReference type="PDBsum" id="5LMN"/>
<dbReference type="PDBsum" id="5LMO"/>
<dbReference type="PDBsum" id="5LMP"/>
<dbReference type="PDBsum" id="5LMQ"/>
<dbReference type="PDBsum" id="5LMR"/>
<dbReference type="PDBsum" id="5LMS"/>
<dbReference type="PDBsum" id="5LMT"/>
<dbReference type="PDBsum" id="5LMU"/>
<dbReference type="PDBsum" id="5LMV"/>
<dbReference type="PDBsum" id="5NDJ"/>
<dbReference type="PDBsum" id="5NDK"/>
<dbReference type="PDBsum" id="5OT7"/>
<dbReference type="PDBsum" id="5UQ7"/>
<dbReference type="PDBsum" id="5UQ8"/>
<dbReference type="PDBsum" id="5VP2"/>
<dbReference type="PDBsum" id="5VPO"/>
<dbReference type="PDBsum" id="5VPP"/>
<dbReference type="PDBsum" id="5W4K"/>
<dbReference type="PDBsum" id="5WIS"/>
<dbReference type="PDBsum" id="5WIT"/>
<dbReference type="PDBsum" id="5WNP"/>
<dbReference type="PDBsum" id="5WNQ"/>
<dbReference type="PDBsum" id="5WNR"/>
<dbReference type="PDBsum" id="5WNS"/>
<dbReference type="PDBsum" id="5WNT"/>
<dbReference type="PDBsum" id="5WNU"/>
<dbReference type="PDBsum" id="5WNV"/>
<dbReference type="PDBsum" id="5ZLU"/>
<dbReference type="PDBsum" id="6BUW"/>
<dbReference type="PDBsum" id="6BZ6"/>
<dbReference type="PDBsum" id="6BZ7"/>
<dbReference type="PDBsum" id="6BZ8"/>
<dbReference type="PDBsum" id="6C5L"/>
<dbReference type="PDBsum" id="6CAE"/>
<dbReference type="PDBsum" id="6CAO"/>
<dbReference type="PDBsum" id="6CAP"/>
<dbReference type="PDBsum" id="6CAQ"/>
<dbReference type="PDBsum" id="6CAR"/>
<dbReference type="PDBsum" id="6CAS"/>
<dbReference type="PDBsum" id="6CFJ"/>
<dbReference type="PDBsum" id="6CFK"/>
<dbReference type="PDBsum" id="6CFL"/>
<dbReference type="PDBsum" id="6CZR"/>
<dbReference type="PDBsum" id="6DTI"/>
<dbReference type="PDBsum" id="6FKR"/>
<dbReference type="PDBsum" id="6GSJ"/>
<dbReference type="PDBsum" id="6GSK"/>
<dbReference type="PDBsum" id="6GSL"/>
<dbReference type="PDBsum" id="6GZQ"/>
<dbReference type="PDBsum" id="6GZX"/>
<dbReference type="PDBsum" id="6GZZ"/>
<dbReference type="PDBsum" id="6MKN"/>
<dbReference type="PDBsum" id="6MPF"/>
<dbReference type="PDBsum" id="6MPI"/>
<dbReference type="PDBsum" id="6N9E"/>
<dbReference type="PDBsum" id="6N9F"/>
<dbReference type="PDBsum" id="6ND5"/>
<dbReference type="PDBsum" id="6ND6"/>
<dbReference type="PDBsum" id="6NDK"/>
<dbReference type="PDBsum" id="6NSH"/>
<dbReference type="PDBsum" id="6NTA"/>
<dbReference type="PDBsum" id="6NUO"/>
<dbReference type="PDBsum" id="6NWY"/>
<dbReference type="PDBsum" id="6NY6"/>
<dbReference type="PDBsum" id="6O3M"/>
<dbReference type="PDBsum" id="6O97"/>
<dbReference type="PDBsum" id="6OF1"/>
<dbReference type="PDBsum" id="6OF6"/>
<dbReference type="PDBsum" id="6OJ2"/>
<dbReference type="PDBsum" id="6OPE"/>
<dbReference type="PDBsum" id="6ORD"/>
<dbReference type="PDBsum" id="6OSI"/>
<dbReference type="PDBsum" id="6OTR"/>
<dbReference type="PDBsum" id="6OXA"/>
<dbReference type="PDBsum" id="6OXI"/>
<dbReference type="PDBsum" id="6Q95"/>
<dbReference type="PDBsum" id="6QNQ"/>
<dbReference type="PDBsum" id="6QNR"/>
<dbReference type="PDBsum" id="6UCQ"/>
<dbReference type="PDBsum" id="6UO1"/>
<dbReference type="PDBsum" id="6XHV"/>
<dbReference type="PDBsum" id="6XHW"/>
<dbReference type="PDBsum" id="6XHX"/>
<dbReference type="PDBsum" id="6XHY"/>
<dbReference type="PDBsum" id="6XQD"/>
<dbReference type="PDBsum" id="6XQE"/>
<dbReference type="PDBsum" id="7AZO"/>
<dbReference type="PDBsum" id="7AZS"/>
<dbReference type="PDBsum" id="7DUG"/>
<dbReference type="PDBsum" id="7DUH"/>
<dbReference type="PDBsum" id="7DUI"/>
<dbReference type="PDBsum" id="7DUJ"/>
<dbReference type="PDBsum" id="7DUK"/>
<dbReference type="PDBsum" id="7DUL"/>
<dbReference type="PDBsum" id="7JQL"/>
<dbReference type="PDBsum" id="7JQM"/>
<dbReference type="PDBsum" id="7LH5"/>
<dbReference type="PDBsum" id="7MD7"/>
<dbReference type="PDBsum" id="7RQ8"/>
<dbReference type="PDBsum" id="7RQ9"/>
<dbReference type="PDBsum" id="7RQA"/>
<dbReference type="PDBsum" id="7RQB"/>
<dbReference type="PDBsum" id="7RQC"/>
<dbReference type="PDBsum" id="7RQD"/>
<dbReference type="PDBsum" id="7RQE"/>
<dbReference type="PDBsum" id="7U2H"/>
<dbReference type="PDBsum" id="7U2I"/>
<dbReference type="PDBsum" id="7U2J"/>
<dbReference type="PDBsum" id="7V2L"/>
<dbReference type="PDBsum" id="7V2M"/>
<dbReference type="PDBsum" id="7V2N"/>
<dbReference type="PDBsum" id="7V2O"/>
<dbReference type="PDBsum" id="7V2P"/>
<dbReference type="PDBsum" id="7V2Q"/>
<dbReference type="PDBsum" id="8CVJ"/>
<dbReference type="PDBsum" id="8CVK"/>
<dbReference type="PDBsum" id="8CVL"/>
<dbReference type="PDBsum" id="8EKB"/>
<dbReference type="PDBsum" id="8EV6"/>
<dbReference type="PDBsum" id="8EV7"/>
<dbReference type="PDBsum" id="8FC1"/>
<dbReference type="PDBsum" id="8FC2"/>
<dbReference type="PDBsum" id="8FC3"/>
<dbReference type="PDBsum" id="8FC4"/>
<dbReference type="PDBsum" id="8FC5"/>
<dbReference type="PDBsum" id="8FC6"/>
<dbReference type="PDBsum" id="8FOM"/>
<dbReference type="PDBsum" id="8FON"/>
<dbReference type="PDBsum" id="8G29"/>
<dbReference type="PDBsum" id="8G2A"/>
<dbReference type="PDBsum" id="8G2B"/>
<dbReference type="PDBsum" id="8G2C"/>
<dbReference type="PDBsum" id="8G2D"/>
<dbReference type="PDBsum" id="8T8B"/>
<dbReference type="PDBsum" id="8T8C"/>
<dbReference type="PDBsum" id="8UD6"/>
<dbReference type="PDBsum" id="8UD7"/>
<dbReference type="PDBsum" id="8UD8"/>
<dbReference type="PDBsum" id="8UVR"/>
<dbReference type="PDBsum" id="8UVS"/>
<dbReference type="PDBsum" id="8VTU"/>
<dbReference type="PDBsum" id="8VTV"/>
<dbReference type="PDBsum" id="8VTW"/>
<dbReference type="PDBsum" id="8VTX"/>
<dbReference type="PDBsum" id="8VTY"/>
<dbReference type="PDBsum" id="9B00"/>
<dbReference type="PDBsum" id="9D0J"/>
<dbReference type="PDBsum" id="9D7R"/>
<dbReference type="PDBsum" id="9D7S"/>
<dbReference type="PDBsum" id="9D7T"/>
<dbReference type="PDBsum" id="9DFC"/>
<dbReference type="PDBsum" id="9DFD"/>
<dbReference type="PDBsum" id="9DFE"/>
<dbReference type="EMDB" id="EMD-0101"/>
<dbReference type="EMDB" id="EMD-0104"/>
<dbReference type="EMDB" id="EMD-0105"/>
<dbReference type="EMDB" id="EMD-31655"/>
<dbReference type="EMDB" id="EMD-31656"/>
<dbReference type="EMDB" id="EMD-31657"/>
<dbReference type="EMDB" id="EMD-31658"/>
<dbReference type="EMDB" id="EMD-31659"/>
<dbReference type="EMDB" id="EMD-31660"/>
<dbReference type="EMDB" id="EMD-3852"/>
<dbReference type="EMDB" id="EMD-4073"/>
<dbReference type="EMDB" id="EMD-4074"/>
<dbReference type="EMDB" id="EMD-4075"/>
<dbReference type="EMDB" id="EMD-4076"/>
<dbReference type="EMDB" id="EMD-4077"/>
<dbReference type="EMDB" id="EMD-4078"/>
<dbReference type="EMDB" id="EMD-4079"/>
<dbReference type="EMDB" id="EMD-4080"/>
<dbReference type="EMDB" id="EMD-4083"/>
<dbReference type="EMDB" id="EMD-4475"/>
<dbReference type="EMDB" id="EMD-6934"/>
<dbReference type="EMDB" id="EMD-8596"/>
<dbReference type="EMDB" id="EMD-8597"/>
<dbReference type="SMR" id="P80372"/>
<dbReference type="IntAct" id="P80372">
    <property type="interactions" value="10"/>
</dbReference>
<dbReference type="DrugBank" id="DB08185">
    <property type="generic name" value="2-METHYLTHIO-N6-ISOPENTENYL-ADENOSINE-5'-MONOPHOSPHATE"/>
</dbReference>
<dbReference type="EnsemblBacteria" id="BAD71509">
    <property type="protein sequence ID" value="BAD71509"/>
    <property type="gene ID" value="BAD71509"/>
</dbReference>
<dbReference type="GeneID" id="3168725"/>
<dbReference type="KEGG" id="ttj:TTHA1686"/>
<dbReference type="PATRIC" id="fig|300852.9.peg.1656"/>
<dbReference type="eggNOG" id="COG0092">
    <property type="taxonomic scope" value="Bacteria"/>
</dbReference>
<dbReference type="HOGENOM" id="CLU_058591_0_2_0"/>
<dbReference type="PhylomeDB" id="P80372"/>
<dbReference type="EvolutionaryTrace" id="P80372"/>
<dbReference type="Proteomes" id="UP000000532">
    <property type="component" value="Chromosome"/>
</dbReference>
<dbReference type="GO" id="GO:0022627">
    <property type="term" value="C:cytosolic small ribosomal subunit"/>
    <property type="evidence" value="ECO:0007669"/>
    <property type="project" value="TreeGrafter"/>
</dbReference>
<dbReference type="GO" id="GO:0003729">
    <property type="term" value="F:mRNA binding"/>
    <property type="evidence" value="ECO:0007669"/>
    <property type="project" value="UniProtKB-UniRule"/>
</dbReference>
<dbReference type="GO" id="GO:0019843">
    <property type="term" value="F:rRNA binding"/>
    <property type="evidence" value="ECO:0007669"/>
    <property type="project" value="UniProtKB-UniRule"/>
</dbReference>
<dbReference type="GO" id="GO:0003735">
    <property type="term" value="F:structural constituent of ribosome"/>
    <property type="evidence" value="ECO:0007669"/>
    <property type="project" value="InterPro"/>
</dbReference>
<dbReference type="GO" id="GO:0006412">
    <property type="term" value="P:translation"/>
    <property type="evidence" value="ECO:0007669"/>
    <property type="project" value="UniProtKB-UniRule"/>
</dbReference>
<dbReference type="CDD" id="cd02412">
    <property type="entry name" value="KH-II_30S_S3"/>
    <property type="match status" value="1"/>
</dbReference>
<dbReference type="FunFam" id="3.30.300.20:FF:000001">
    <property type="entry name" value="30S ribosomal protein S3"/>
    <property type="match status" value="1"/>
</dbReference>
<dbReference type="Gene3D" id="3.30.300.20">
    <property type="match status" value="1"/>
</dbReference>
<dbReference type="Gene3D" id="3.30.1140.32">
    <property type="entry name" value="Ribosomal protein S3, C-terminal domain"/>
    <property type="match status" value="1"/>
</dbReference>
<dbReference type="HAMAP" id="MF_01309_B">
    <property type="entry name" value="Ribosomal_uS3_B"/>
    <property type="match status" value="1"/>
</dbReference>
<dbReference type="InterPro" id="IPR004087">
    <property type="entry name" value="KH_dom"/>
</dbReference>
<dbReference type="InterPro" id="IPR015946">
    <property type="entry name" value="KH_dom-like_a/b"/>
</dbReference>
<dbReference type="InterPro" id="IPR004044">
    <property type="entry name" value="KH_dom_type_2"/>
</dbReference>
<dbReference type="InterPro" id="IPR009019">
    <property type="entry name" value="KH_sf_prok-type"/>
</dbReference>
<dbReference type="InterPro" id="IPR036419">
    <property type="entry name" value="Ribosomal_S3_C_sf"/>
</dbReference>
<dbReference type="InterPro" id="IPR005704">
    <property type="entry name" value="Ribosomal_uS3_bac-typ"/>
</dbReference>
<dbReference type="InterPro" id="IPR001351">
    <property type="entry name" value="Ribosomal_uS3_C"/>
</dbReference>
<dbReference type="InterPro" id="IPR018280">
    <property type="entry name" value="Ribosomal_uS3_CS"/>
</dbReference>
<dbReference type="NCBIfam" id="TIGR01009">
    <property type="entry name" value="rpsC_bact"/>
    <property type="match status" value="1"/>
</dbReference>
<dbReference type="PANTHER" id="PTHR11760">
    <property type="entry name" value="30S/40S RIBOSOMAL PROTEIN S3"/>
    <property type="match status" value="1"/>
</dbReference>
<dbReference type="PANTHER" id="PTHR11760:SF19">
    <property type="entry name" value="SMALL RIBOSOMAL SUBUNIT PROTEIN US3C"/>
    <property type="match status" value="1"/>
</dbReference>
<dbReference type="Pfam" id="PF07650">
    <property type="entry name" value="KH_2"/>
    <property type="match status" value="1"/>
</dbReference>
<dbReference type="Pfam" id="PF00189">
    <property type="entry name" value="Ribosomal_S3_C"/>
    <property type="match status" value="1"/>
</dbReference>
<dbReference type="SMART" id="SM00322">
    <property type="entry name" value="KH"/>
    <property type="match status" value="1"/>
</dbReference>
<dbReference type="SUPFAM" id="SSF54814">
    <property type="entry name" value="Prokaryotic type KH domain (KH-domain type II)"/>
    <property type="match status" value="1"/>
</dbReference>
<dbReference type="SUPFAM" id="SSF54821">
    <property type="entry name" value="Ribosomal protein S3 C-terminal domain"/>
    <property type="match status" value="1"/>
</dbReference>
<dbReference type="PROSITE" id="PS50823">
    <property type="entry name" value="KH_TYPE_2"/>
    <property type="match status" value="1"/>
</dbReference>
<dbReference type="PROSITE" id="PS00548">
    <property type="entry name" value="RIBOSOMAL_S3"/>
    <property type="match status" value="1"/>
</dbReference>
<evidence type="ECO:0000256" key="1">
    <source>
        <dbReference type="SAM" id="MobiDB-lite"/>
    </source>
</evidence>
<evidence type="ECO:0000269" key="2">
    <source>
    </source>
</evidence>
<evidence type="ECO:0000269" key="3">
    <source>
    </source>
</evidence>
<evidence type="ECO:0000305" key="4"/>
<evidence type="ECO:0007829" key="5">
    <source>
        <dbReference type="PDB" id="1FJG"/>
    </source>
</evidence>
<evidence type="ECO:0007829" key="6">
    <source>
        <dbReference type="PDB" id="1N32"/>
    </source>
</evidence>
<evidence type="ECO:0007829" key="7">
    <source>
        <dbReference type="PDB" id="1XNR"/>
    </source>
</evidence>
<evidence type="ECO:0007829" key="8">
    <source>
        <dbReference type="PDB" id="2UXC"/>
    </source>
</evidence>
<evidence type="ECO:0007829" key="9">
    <source>
        <dbReference type="PDB" id="2UXD"/>
    </source>
</evidence>
<evidence type="ECO:0007829" key="10">
    <source>
        <dbReference type="PDB" id="2VQE"/>
    </source>
</evidence>
<evidence type="ECO:0007829" key="11">
    <source>
        <dbReference type="PDB" id="3T1Y"/>
    </source>
</evidence>
<evidence type="ECO:0007829" key="12">
    <source>
        <dbReference type="PDB" id="4YHH"/>
    </source>
</evidence>
<sequence>MGNKIHPIGFRLGITRDWESRWYAGKKQYRHLLLEDQRIRGLLEKELYSAGLARVDIERAADNVAVTVHVAKPGVVIGRGGERIRVLREELAKLTGKNVALNVQEVQNPNLSAPLVAQRVAEQIERRFAVRRAIKQAVQRVMESGAKGAKVIVSGRIGGAEQARTEWAAQGRVPLHTLRANIDYGFALARTTYGVLGVKAYIFLGEVIGGQKPKARPELPKAEERPRRRRPAVRVKKEE</sequence>